<name>DDX17_HUMAN</name>
<keyword id="KW-0002">3D-structure</keyword>
<keyword id="KW-0007">Acetylation</keyword>
<keyword id="KW-0024">Alternative initiation</keyword>
<keyword id="KW-0025">Alternative splicing</keyword>
<keyword id="KW-0051">Antiviral defense</keyword>
<keyword id="KW-0067">ATP-binding</keyword>
<keyword id="KW-0963">Cytoplasm</keyword>
<keyword id="KW-0903">Direct protein sequencing</keyword>
<keyword id="KW-0347">Helicase</keyword>
<keyword id="KW-0378">Hydrolase</keyword>
<keyword id="KW-0391">Immunity</keyword>
<keyword id="KW-1017">Isopeptide bond</keyword>
<keyword id="KW-0488">Methylation</keyword>
<keyword id="KW-0507">mRNA processing</keyword>
<keyword id="KW-0508">mRNA splicing</keyword>
<keyword id="KW-0547">Nucleotide-binding</keyword>
<keyword id="KW-0539">Nucleus</keyword>
<keyword id="KW-0597">Phosphoprotein</keyword>
<keyword id="KW-1267">Proteomics identification</keyword>
<keyword id="KW-1185">Reference proteome</keyword>
<keyword id="KW-0694">RNA-binding</keyword>
<keyword id="KW-0943">RNA-mediated gene silencing</keyword>
<keyword id="KW-0698">rRNA processing</keyword>
<keyword id="KW-0804">Transcription</keyword>
<keyword id="KW-0805">Transcription regulation</keyword>
<keyword id="KW-0832">Ubl conjugation</keyword>
<feature type="chain" id="PRO_0000054993" description="Probable ATP-dependent RNA helicase DDX17">
    <location>
        <begin position="1"/>
        <end position="729"/>
    </location>
</feature>
<feature type="domain" description="Helicase ATP-binding" evidence="2">
    <location>
        <begin position="202"/>
        <end position="377"/>
    </location>
</feature>
<feature type="domain" description="Helicase C-terminal" evidence="3">
    <location>
        <begin position="405"/>
        <end position="552"/>
    </location>
</feature>
<feature type="region of interest" description="Disordered" evidence="4">
    <location>
        <begin position="20"/>
        <end position="115"/>
    </location>
</feature>
<feature type="region of interest" description="Transactivation domain">
    <location>
        <begin position="547"/>
        <end position="729"/>
    </location>
</feature>
<feature type="region of interest" description="Disordered" evidence="4">
    <location>
        <begin position="551"/>
        <end position="623"/>
    </location>
</feature>
<feature type="region of interest" description="Disordered" evidence="4">
    <location>
        <begin position="659"/>
        <end position="729"/>
    </location>
</feature>
<feature type="region of interest" description="Interaction with YAP1" evidence="27">
    <location>
        <begin position="718"/>
        <end position="726"/>
    </location>
</feature>
<feature type="short sequence motif" description="Q motif">
    <location>
        <begin position="171"/>
        <end position="199"/>
    </location>
</feature>
<feature type="short sequence motif" description="DEAD box">
    <location>
        <begin position="325"/>
        <end position="328"/>
    </location>
</feature>
<feature type="compositionally biased region" description="Basic and acidic residues" evidence="4">
    <location>
        <begin position="86"/>
        <end position="95"/>
    </location>
</feature>
<feature type="compositionally biased region" description="Gly residues" evidence="4">
    <location>
        <begin position="96"/>
        <end position="105"/>
    </location>
</feature>
<feature type="compositionally biased region" description="Polar residues" evidence="4">
    <location>
        <begin position="568"/>
        <end position="578"/>
    </location>
</feature>
<feature type="compositionally biased region" description="Basic and acidic residues" evidence="4">
    <location>
        <begin position="583"/>
        <end position="610"/>
    </location>
</feature>
<feature type="compositionally biased region" description="Low complexity" evidence="4">
    <location>
        <begin position="659"/>
        <end position="688"/>
    </location>
</feature>
<feature type="compositionally biased region" description="Polar residues" evidence="4">
    <location>
        <begin position="689"/>
        <end position="698"/>
    </location>
</feature>
<feature type="compositionally biased region" description="Pro residues" evidence="4">
    <location>
        <begin position="717"/>
        <end position="729"/>
    </location>
</feature>
<feature type="binding site" evidence="2">
    <location>
        <begin position="215"/>
        <end position="222"/>
    </location>
    <ligand>
        <name>ATP</name>
        <dbReference type="ChEBI" id="CHEBI:30616"/>
    </ligand>
</feature>
<feature type="modified residue" description="Phosphoserine" evidence="41 43">
    <location>
        <position position="64"/>
    </location>
</feature>
<feature type="modified residue" description="N6-acetyllysine; by EP300" evidence="20">
    <location>
        <position position="108"/>
    </location>
</feature>
<feature type="modified residue" description="N6-acetyllysine; by EP300" evidence="20">
    <location>
        <position position="109"/>
    </location>
</feature>
<feature type="modified residue" description="N6-acetyllysine; by EP300" evidence="20">
    <location>
        <position position="121"/>
    </location>
</feature>
<feature type="modified residue" description="Phosphothreonine" evidence="40">
    <location>
        <position position="523"/>
    </location>
</feature>
<feature type="modified residue" description="Omega-N-methylarginine" evidence="42">
    <location>
        <position position="684"/>
    </location>
</feature>
<feature type="cross-link" description="Glycyl lysine isopeptide (Lys-Gly) (interchain with G-Cter in SUMO); alternate">
    <location>
        <position position="129"/>
    </location>
</feature>
<feature type="cross-link" description="Glycyl lysine isopeptide (Lys-Gly) (interchain with G-Cter in SUMO1); alternate" evidence="18 44">
    <location>
        <position position="129"/>
    </location>
</feature>
<feature type="cross-link" description="Glycyl lysine isopeptide (Lys-Gly) (interchain with G-Cter in SUMO2); alternate" evidence="45 46 47 48">
    <location>
        <position position="129"/>
    </location>
</feature>
<feature type="cross-link" description="Glycyl lysine isopeptide (Lys-Gly) (interchain with G-Cter in SUMO2)" evidence="48">
    <location>
        <position position="528"/>
    </location>
</feature>
<feature type="splice variant" id="VSP_042527" description="In isoform 2, isoform 3 and isoform 4." evidence="35 36 38">
    <location>
        <begin position="1"/>
        <end position="79"/>
    </location>
</feature>
<feature type="splice variant" id="VSP_042528" description="In isoform 3." evidence="36">
    <original>L</original>
    <variation>LGL</variation>
    <location>
        <position position="482"/>
    </location>
</feature>
<feature type="splice variant" id="VSP_042529" description="In isoform 4." evidence="35">
    <original>G</original>
    <variation>GKG</variation>
    <location>
        <position position="562"/>
    </location>
</feature>
<feature type="mutagenesis site" description="No effect on HDAC1-, HDAC2- nor HDAC3-binding, small decrease in ESR1 coactivation, decreased TP53 coactivation. Complete loss of lysine acetylation, decreased stability, loss of ESR1 and TP53 coactivation and loss of HDAC1- and HDAC3-binding, no effect on HDAC2-binding; when associated with R-121." evidence="20">
    <original>KK</original>
    <variation>RR</variation>
    <location>
        <begin position="108"/>
        <end position="109"/>
    </location>
</feature>
<feature type="mutagenesis site" description="No effect on HDAC1-, HDAC2- nor HDAC3-binding, decreased ESR1 coactivation, strongly decreased TP53 coactivation. Complete loss of lysine acetylation, decreased stability, loss of ESR1 and TP53 coactivation and loss of HDAC1- and HDAC3-binding, no effect on HDAC2-binding; when associated with 108-R-R-109." evidence="20">
    <original>K</original>
    <variation>R</variation>
    <location>
        <position position="121"/>
    </location>
</feature>
<feature type="mutagenesis site" description="Impaired sumoylation and decreased stability. Impairs interaction with HDAC1, but not with HDAC2, nor HDAC3. No effect on EP300-, ESR1-, DDX5- and YAP1-binding." evidence="18 27">
    <original>K</original>
    <variation>R</variation>
    <location>
        <position position="129"/>
    </location>
</feature>
<feature type="mutagenesis site" description="No effect on transcription activation, when assayed in luciferase reporter gene assays using MDM2 or FOS promoters, either alone or in the presence of EP300 and KAT2B." evidence="12">
    <original>K</original>
    <variation>N</variation>
    <location>
        <position position="221"/>
    </location>
</feature>
<feature type="mutagenesis site" description="Loss of helicase activity. Loss of splicing regulation in the estrogen signaling pathway. Reduced CD44 alternative splicing regulation. Does not promote ZCH3HAV1-mediated RNA degradation." evidence="6 16 26">
    <original>K</original>
    <variation>R</variation>
    <location>
        <position position="221"/>
    </location>
</feature>
<feature type="mutagenesis site" description="Decreased CD44 alternative splicing." evidence="6">
    <original>T</original>
    <variation>A</variation>
    <location>
        <position position="222"/>
    </location>
</feature>
<feature type="mutagenesis site" description="Loss of helicase activity. No effect on ESR1 coactivation." evidence="17">
    <original>D</original>
    <variation>N</variation>
    <location>
        <position position="325"/>
    </location>
</feature>
<feature type="mutagenesis site" description="Small decrease in CD44 alternative splicing." evidence="6">
    <original>D</original>
    <variation>H</variation>
    <location>
        <position position="328"/>
    </location>
</feature>
<feature type="mutagenesis site" description="Small decrease in CD44 alternative splicing." evidence="6">
    <original>W</original>
    <variation>G</variation>
    <location>
        <position position="355"/>
    </location>
</feature>
<feature type="mutagenesis site" description="Small decrease in CD44 alternative splicing." evidence="6">
    <original>S</original>
    <variation>L</variation>
    <location>
        <position position="356"/>
    </location>
</feature>
<feature type="turn" evidence="49">
    <location>
        <begin position="124"/>
        <end position="126"/>
    </location>
</feature>
<feature type="helix" evidence="50">
    <location>
        <begin position="139"/>
        <end position="142"/>
    </location>
</feature>
<feature type="helix" evidence="50">
    <location>
        <begin position="146"/>
        <end position="156"/>
    </location>
</feature>
<feature type="strand" evidence="50">
    <location>
        <begin position="158"/>
        <end position="160"/>
    </location>
</feature>
<feature type="helix" evidence="50">
    <location>
        <begin position="173"/>
        <end position="175"/>
    </location>
</feature>
<feature type="helix" evidence="50">
    <location>
        <begin position="180"/>
        <end position="188"/>
    </location>
</feature>
<feature type="helix" evidence="50">
    <location>
        <begin position="196"/>
        <end position="206"/>
    </location>
</feature>
<feature type="strand" evidence="50">
    <location>
        <begin position="210"/>
        <end position="214"/>
    </location>
</feature>
<feature type="helix" evidence="50">
    <location>
        <begin position="221"/>
        <end position="234"/>
    </location>
</feature>
<feature type="strand" evidence="50">
    <location>
        <begin position="246"/>
        <end position="250"/>
    </location>
</feature>
<feature type="helix" evidence="50">
    <location>
        <begin position="254"/>
        <end position="268"/>
    </location>
</feature>
<feature type="helix" evidence="50">
    <location>
        <begin position="269"/>
        <end position="271"/>
    </location>
</feature>
<feature type="strand" evidence="50">
    <location>
        <begin position="275"/>
        <end position="278"/>
    </location>
</feature>
<feature type="helix" evidence="50">
    <location>
        <begin position="284"/>
        <end position="293"/>
    </location>
</feature>
<feature type="strand" evidence="50">
    <location>
        <begin position="296"/>
        <end position="300"/>
    </location>
</feature>
<feature type="helix" evidence="50">
    <location>
        <begin position="302"/>
        <end position="310"/>
    </location>
</feature>
<feature type="strand" evidence="50">
    <location>
        <begin position="321"/>
        <end position="324"/>
    </location>
</feature>
<feature type="helix" evidence="50">
    <location>
        <begin position="327"/>
        <end position="330"/>
    </location>
</feature>
<feature type="turn" evidence="50">
    <location>
        <begin position="333"/>
        <end position="335"/>
    </location>
</feature>
<feature type="helix" evidence="50">
    <location>
        <begin position="336"/>
        <end position="343"/>
    </location>
</feature>
<feature type="strand" evidence="50">
    <location>
        <begin position="350"/>
        <end position="357"/>
    </location>
</feature>
<feature type="helix" evidence="50">
    <location>
        <begin position="361"/>
        <end position="363"/>
    </location>
</feature>
<feature type="helix" evidence="50">
    <location>
        <begin position="364"/>
        <end position="367"/>
    </location>
</feature>
<feature type="helix" evidence="50">
    <location>
        <begin position="368"/>
        <end position="370"/>
    </location>
</feature>
<feature type="strand" evidence="50">
    <location>
        <begin position="372"/>
        <end position="380"/>
    </location>
</feature>
<feature type="strand" evidence="50">
    <location>
        <begin position="382"/>
        <end position="384"/>
    </location>
</feature>
<feature type="strand" evidence="50">
    <location>
        <begin position="390"/>
        <end position="396"/>
    </location>
</feature>
<feature type="helix" evidence="50">
    <location>
        <begin position="399"/>
        <end position="401"/>
    </location>
</feature>
<feature type="helix" evidence="50">
    <location>
        <begin position="402"/>
        <end position="414"/>
    </location>
</feature>
<feature type="strand" evidence="50">
    <location>
        <begin position="416"/>
        <end position="418"/>
    </location>
</feature>
<feature type="strand" evidence="50">
    <location>
        <begin position="421"/>
        <end position="424"/>
    </location>
</feature>
<feature type="helix" evidence="50">
    <location>
        <begin position="428"/>
        <end position="440"/>
    </location>
</feature>
<feature type="strand" evidence="50">
    <location>
        <begin position="445"/>
        <end position="448"/>
    </location>
</feature>
<feature type="helix" evidence="50">
    <location>
        <begin position="454"/>
        <end position="466"/>
    </location>
</feature>
<feature type="strand" evidence="50">
    <location>
        <begin position="467"/>
        <end position="469"/>
    </location>
</feature>
<feature type="strand" evidence="50">
    <location>
        <begin position="471"/>
        <end position="474"/>
    </location>
</feature>
<feature type="helix" evidence="50">
    <location>
        <begin position="476"/>
        <end position="478"/>
    </location>
</feature>
<feature type="strand" evidence="50">
    <location>
        <begin position="479"/>
        <end position="481"/>
    </location>
</feature>
<feature type="strand" evidence="50">
    <location>
        <begin position="489"/>
        <end position="494"/>
    </location>
</feature>
<feature type="helix" evidence="50">
    <location>
        <begin position="499"/>
        <end position="506"/>
    </location>
</feature>
<feature type="strand" evidence="50">
    <location>
        <begin position="516"/>
        <end position="522"/>
    </location>
</feature>
<feature type="helix" evidence="50">
    <location>
        <begin position="524"/>
        <end position="529"/>
    </location>
</feature>
<feature type="helix" evidence="50">
    <location>
        <begin position="530"/>
        <end position="539"/>
    </location>
</feature>
<feature type="helix" evidence="50">
    <location>
        <begin position="546"/>
        <end position="551"/>
    </location>
</feature>
<proteinExistence type="evidence at protein level"/>
<evidence type="ECO:0000250" key="1">
    <source>
        <dbReference type="UniProtKB" id="Q501J6"/>
    </source>
</evidence>
<evidence type="ECO:0000255" key="2">
    <source>
        <dbReference type="PROSITE-ProRule" id="PRU00541"/>
    </source>
</evidence>
<evidence type="ECO:0000255" key="3">
    <source>
        <dbReference type="PROSITE-ProRule" id="PRU00542"/>
    </source>
</evidence>
<evidence type="ECO:0000256" key="4">
    <source>
        <dbReference type="SAM" id="MobiDB-lite"/>
    </source>
</evidence>
<evidence type="ECO:0000269" key="5">
    <source>
    </source>
</evidence>
<evidence type="ECO:0000269" key="6">
    <source>
    </source>
</evidence>
<evidence type="ECO:0000269" key="7">
    <source>
    </source>
</evidence>
<evidence type="ECO:0000269" key="8">
    <source>
    </source>
</evidence>
<evidence type="ECO:0000269" key="9">
    <source>
    </source>
</evidence>
<evidence type="ECO:0000269" key="10">
    <source>
    </source>
</evidence>
<evidence type="ECO:0000269" key="11">
    <source>
    </source>
</evidence>
<evidence type="ECO:0000269" key="12">
    <source>
    </source>
</evidence>
<evidence type="ECO:0000269" key="13">
    <source>
    </source>
</evidence>
<evidence type="ECO:0000269" key="14">
    <source>
    </source>
</evidence>
<evidence type="ECO:0000269" key="15">
    <source>
    </source>
</evidence>
<evidence type="ECO:0000269" key="16">
    <source>
    </source>
</evidence>
<evidence type="ECO:0000269" key="17">
    <source>
    </source>
</evidence>
<evidence type="ECO:0000269" key="18">
    <source>
    </source>
</evidence>
<evidence type="ECO:0000269" key="19">
    <source>
    </source>
</evidence>
<evidence type="ECO:0000269" key="20">
    <source>
    </source>
</evidence>
<evidence type="ECO:0000269" key="21">
    <source>
    </source>
</evidence>
<evidence type="ECO:0000269" key="22">
    <source>
    </source>
</evidence>
<evidence type="ECO:0000269" key="23">
    <source>
    </source>
</evidence>
<evidence type="ECO:0000269" key="24">
    <source>
    </source>
</evidence>
<evidence type="ECO:0000269" key="25">
    <source>
    </source>
</evidence>
<evidence type="ECO:0000269" key="26">
    <source>
    </source>
</evidence>
<evidence type="ECO:0000269" key="27">
    <source>
    </source>
</evidence>
<evidence type="ECO:0000269" key="28">
    <source>
    </source>
</evidence>
<evidence type="ECO:0000269" key="29">
    <source>
    </source>
</evidence>
<evidence type="ECO:0000269" key="30">
    <source>
    </source>
</evidence>
<evidence type="ECO:0000269" key="31">
    <source>
    </source>
</evidence>
<evidence type="ECO:0000269" key="32">
    <source>
    </source>
</evidence>
<evidence type="ECO:0000269" key="33">
    <source>
    </source>
</evidence>
<evidence type="ECO:0000269" key="34">
    <source>
    </source>
</evidence>
<evidence type="ECO:0000303" key="35">
    <source>
    </source>
</evidence>
<evidence type="ECO:0000303" key="36">
    <source>
    </source>
</evidence>
<evidence type="ECO:0000303" key="37">
    <source>
    </source>
</evidence>
<evidence type="ECO:0000303" key="38">
    <source>
    </source>
</evidence>
<evidence type="ECO:0000305" key="39"/>
<evidence type="ECO:0007744" key="40">
    <source>
    </source>
</evidence>
<evidence type="ECO:0007744" key="41">
    <source>
    </source>
</evidence>
<evidence type="ECO:0007744" key="42">
    <source>
    </source>
</evidence>
<evidence type="ECO:0007744" key="43">
    <source>
    </source>
</evidence>
<evidence type="ECO:0007744" key="44">
    <source>
    </source>
</evidence>
<evidence type="ECO:0007744" key="45">
    <source>
    </source>
</evidence>
<evidence type="ECO:0007744" key="46">
    <source>
    </source>
</evidence>
<evidence type="ECO:0007744" key="47">
    <source>
    </source>
</evidence>
<evidence type="ECO:0007744" key="48">
    <source>
    </source>
</evidence>
<evidence type="ECO:0007829" key="49">
    <source>
        <dbReference type="PDB" id="6UV2"/>
    </source>
</evidence>
<evidence type="ECO:0007829" key="50">
    <source>
        <dbReference type="PDB" id="6UV3"/>
    </source>
</evidence>
<comment type="function">
    <text evidence="1 6 8 11 12 13 14 16 17 18 19 20 23 24 26 27 29 30 32 33 39">As an RNA helicase, unwinds RNA and alters RNA structures through ATP binding and hydrolysis. Involved in multiple cellular processes, including pre-mRNA splicing, alternative splicing, ribosomal RNA processing and miRNA processing, as well as transcription regulation. Regulates the alternative splicing of exons exhibiting specific features (PubMed:12138182, PubMed:22266867, PubMed:23022728, PubMed:24910439). For instance, promotes the inclusion of AC-rich alternative exons in CD44 transcripts (PubMed:12138182). This function requires the RNA helicase activity (PubMed:12138182, PubMed:22266867, PubMed:23022728, PubMed:24910439). Affects NFAT5 and histone macro-H2A.1/MACROH2A1 alternative splicing in a CDK9-dependent manner (PubMed:22266867, PubMed:26209609). In NFAT5, promotes the introduction of alternative exon 4, which contains 2 stop codons and may target NFAT5 exon 4-containing transcripts to nonsense-mediated mRNA decay, leading to the down-regulation of NFAT5 protein (PubMed:22266867). Affects splicing of mediators of steroid hormone signaling pathway, including kinases that phosphorylates ESR1, such as CDK2, MAPK1 and GSK3B, and transcriptional regulators, such as CREBBP, MED1, NCOR1 and NCOR2. By affecting GSK3B splicing, participates in ESR1 and AR stabilization (PubMed:24275493). In myoblasts and epithelial cells, cooperates with HNRNPH1 to control the splicing of specific subsets of exons (PubMed:24910439). In addition to binding mature mRNAs, also interacts with certain pri-microRNAs, including MIR663/miR-663a, MIR99B/miR-99b, and MIR6087/miR-6087 (PubMed:25126784). Binds pri-microRNAs on the 3' segment flanking the stem loop via the 5'-[ACG]CAUC[ACU]-3' consensus sequence (PubMed:24581491). Required for the production of subsets of microRNAs, including MIR21 and MIR125B1 (PubMed:24581491, PubMed:27478153). May be involved not only in microRNA primary transcript processing, but also stabilization (By similarity). Participates in MYC down-regulation at high cell density through the production of MYC-targeting microRNAs (PubMed:24581491). Along with DDX5, may be involved in the processing of the 32S intermediate into the mature 28S ribosomal RNA (PubMed:17485482). Promoter-specific transcription regulator, functioning as a coactivator or corepressor depending on the context of the promoter and the transcriptional complex in which it exists (PubMed:15298701). Enhances NFAT5 transcriptional activity (PubMed:22266867). Synergizes with TP53 in the activation of the MDM2 promoter; this activity requires acetylation on lysine residues (PubMed:17226766, PubMed:19995069, PubMed:20663877). May also coactivate MDM2 transcription through a TP53-independent pathway (PubMed:17226766). Coactivates MMP7 transcription (PubMed:17226766). Along with CTNNB1, coactivates MYC, JUN, FOSL1 and cyclin D1/CCND1 transcription (PubMed:17699760). Alone or in combination with DDX5 and/or SRA1 non-coding RNA, plays a critical role in promoting the assembly of proteins required for the formation of the transcription initiation complex and chromatin remodeling leading to coactivation of MYOD1-dependent transcription. This helicase-independent activity is required for skeletal muscle cells to properly differentiate into myotubes (PubMed:17011493, PubMed:24910439). During epithelial-to-mesenchymal transition, coregulates SMAD-dependent transcriptional activity, directly controlling key effectors of differentiation, including miRNAs which in turn directly repress its expression (PubMed:24910439). Plays a role in estrogen and testosterone signaling pathway at several levels. Mediates the use of alternative promoters in estrogen-responsive genes and regulates transcription and splicing of a large number of steroid hormone target genes (PubMed:19995069, PubMed:20406972, PubMed:20663877, PubMed:24275493). Contrary to splicing regulation activity, transcriptional coregulation of the estrogen receptor ESR1 is helicase-independent (PubMed:19718048, PubMed:24275493). Plays a role in innate immunity. Specifically restricts bunyavirus infection, including Rift Valley fever virus (RVFV) or La Crosse virus (LACV), but not vesicular stomatitis virus (VSV), in an interferon- and DROSHA-independent manner (PubMed:25126784). Binds to RVFV RNA, likely via structured viral RNA elements (PubMed:25126784). Promotes mRNA degradation mediated by the antiviral zinc-finger protein ZC3HAV1, in an ATPase-dependent manner (PubMed:18334637).</text>
</comment>
<comment type="catalytic activity">
    <reaction evidence="34">
        <text>ATP + H2O = ADP + phosphate + H(+)</text>
        <dbReference type="Rhea" id="RHEA:13065"/>
        <dbReference type="ChEBI" id="CHEBI:15377"/>
        <dbReference type="ChEBI" id="CHEBI:15378"/>
        <dbReference type="ChEBI" id="CHEBI:30616"/>
        <dbReference type="ChEBI" id="CHEBI:43474"/>
        <dbReference type="ChEBI" id="CHEBI:456216"/>
        <dbReference type="EC" id="3.6.4.13"/>
    </reaction>
</comment>
<comment type="biophysicochemical properties">
    <kinetics>
        <KM evidence="34">170 uM for ATP</KM>
    </kinetics>
</comment>
<comment type="subunit">
    <text evidence="7 8 9 10 11 12 14 15 16 17 18 20 21 23 25 27 28 29 31 32">Interacts with DDX5 in an RNA-independent manner (PubMed:12595555, PubMed:19995069). Interacts with CDK9 transcription elongation complex under basal conditions. Following cell stimulation with poly(I:C), a synthetic double-stranded RNA mimicking viral infection, the interaction with CDK9 is decreased (PubMed:26209609). Interacts with ESR1 in an estrogen-independent manner (PubMed:19718048, PubMed:20663877). Interacts with HNRNPH1; this interaction is important for the regulation of alternative splicing on G-quadruplex structures (PubMed:24910439). At high, but not low, cell density, interacts with DROSHA and DGCR8, the core components of the microprocessor complex involved in the maturation of primary microRNAs (pri-miRNAs) into pre-miRNAs. The interaction with DGCR8 is reduced during mitosis (PubMed:24581491, PubMed:24589731). At low, but not high, cell density, interacts with YAP1 and with its paralog, WWTR1/TAZ. Interactions with DROSHA and YAP1 are mutually exclusive (PubMed:24581491). In vitro, the pre-miRNA processing activity of the DDX17-containing microprocessor complex is weaker than that of the DROSHA/DGCR8 microprocessor complex devoid of DDX17 (PubMed:15531877). Interacts with UPF3B (PubMed:23788676). Interacts with NFAT5; this interaction leads to DDX17 recruitment to LNC2 and S100A4 promoters and NFAT5-mediated DDX17-enhanced transactivation (PubMed:22266867). Interacts with HDAC1, HDAC2 and HDAC3; this interaction with HDAC1 and HDAC3, but not HDAC2, depends upon DDX17 acetylation (PubMed:15298701, PubMed:20663877). Interacts with ZC3HAV1 (via N-terminal domain) in an RNA-independent manner. Interacts with EXOSC3/RRP40 and EXOSC5/RRP46; this interaction may be indirect and mediated by ZC3HAV1-binding (PubMed:18334637). Interacts with EP300; this interaction leads to acetylation at lysine residues (PubMed:17226766, PubMed:19995069). Interacts with CREBBP/CBP and KAT2B/P/CAF (PubMed:17226766). Directly interacts with CTNNB1 (PubMed:17699760). Interacts with MYOD1 (PubMed:17011493). Interacts with TP53 (PubMed:15660129). Interacts with DCP1A in an RNA-independent manner. Interacts with DCP2 in an RNA-dependent manner (PubMed:21876179). Interacts with DHX36; this interaction occurs in a RNA-dependent manner (PubMed:18279852). Interacts with ERCC6 (PubMed:26030138).</text>
</comment>
<comment type="interaction">
    <interactant intactId="EBI-746012">
        <id>Q92841</id>
    </interactant>
    <interactant intactId="EBI-358049">
        <id>Q13895</id>
        <label>BYSL</label>
    </interactant>
    <organismsDiffer>false</organismsDiffer>
    <experiments>6</experiments>
</comment>
<comment type="interaction">
    <interactant intactId="EBI-746012">
        <id>Q92841</id>
    </interactant>
    <interactant intactId="EBI-351962">
        <id>P17844</id>
        <label>DDX5</label>
    </interactant>
    <organismsDiffer>false</organismsDiffer>
    <experiments>5</experiments>
</comment>
<comment type="interaction">
    <interactant intactId="EBI-746012">
        <id>Q92841</id>
    </interactant>
    <interactant intactId="EBI-351257">
        <id>P26196</id>
        <label>DDX6</label>
    </interactant>
    <organismsDiffer>false</organismsDiffer>
    <experiments>4</experiments>
</comment>
<comment type="interaction">
    <interactant intactId="EBI-746012">
        <id>Q92841</id>
    </interactant>
    <interactant intactId="EBI-371866">
        <id>Q9NQT5</id>
        <label>EXOSC3</label>
    </interactant>
    <organismsDiffer>false</organismsDiffer>
    <experiments>2</experiments>
</comment>
<comment type="interaction">
    <interactant intactId="EBI-746012">
        <id>Q92841</id>
    </interactant>
    <interactant intactId="EBI-1052570">
        <id>O95995</id>
        <label>GAS8</label>
    </interactant>
    <organismsDiffer>false</organismsDiffer>
    <experiments>3</experiments>
</comment>
<comment type="interaction">
    <interactant intactId="EBI-746012">
        <id>Q92841</id>
    </interactant>
    <interactant intactId="EBI-401755">
        <id>P62993</id>
        <label>GRB2</label>
    </interactant>
    <organismsDiffer>false</organismsDiffer>
    <experiments>3</experiments>
</comment>
<comment type="interaction">
    <interactant intactId="EBI-746012">
        <id>Q92841</id>
    </interactant>
    <interactant intactId="EBI-351590">
        <id>P31943</id>
        <label>HNRNPH1</label>
    </interactant>
    <organismsDiffer>false</organismsDiffer>
    <experiments>3</experiments>
</comment>
<comment type="interaction">
    <interactant intactId="EBI-746012">
        <id>Q92841</id>
    </interactant>
    <interactant intactId="EBI-739832">
        <id>Q8TBB1</id>
        <label>LNX1</label>
    </interactant>
    <organismsDiffer>false</organismsDiffer>
    <experiments>4</experiments>
</comment>
<comment type="interaction">
    <interactant intactId="EBI-746012">
        <id>Q92841</id>
    </interactant>
    <interactant intactId="EBI-14086479">
        <id>Q8IVT4</id>
        <label>MGC50722</label>
    </interactant>
    <organismsDiffer>false</organismsDiffer>
    <experiments>3</experiments>
</comment>
<comment type="interaction">
    <interactant intactId="EBI-746012">
        <id>Q92841</id>
    </interactant>
    <interactant intactId="EBI-308320">
        <id>O94916</id>
        <label>NFAT5</label>
    </interactant>
    <organismsDiffer>false</organismsDiffer>
    <experiments>3</experiments>
</comment>
<comment type="interaction">
    <interactant intactId="EBI-746012">
        <id>Q92841</id>
    </interactant>
    <interactant intactId="EBI-1383632">
        <id>Q13882</id>
        <label>PTK6</label>
    </interactant>
    <organismsDiffer>false</organismsDiffer>
    <experiments>4</experiments>
</comment>
<comment type="interaction">
    <interactant intactId="EBI-746012">
        <id>Q92841</id>
    </interactant>
    <interactant intactId="EBI-721525">
        <id>P98175</id>
        <label>RBM10</label>
    </interactant>
    <organismsDiffer>false</organismsDiffer>
    <experiments>6</experiments>
</comment>
<comment type="interaction">
    <interactant intactId="EBI-746012">
        <id>Q92841</id>
    </interactant>
    <interactant intactId="EBI-2514922">
        <id>Q96T37</id>
        <label>RBM15</label>
    </interactant>
    <organismsDiffer>false</organismsDiffer>
    <experiments>5</experiments>
</comment>
<comment type="interaction">
    <interactant intactId="EBI-746012">
        <id>Q92841</id>
    </interactant>
    <interactant intactId="EBI-744603">
        <id>Q15637</id>
        <label>SF1</label>
    </interactant>
    <organismsDiffer>false</organismsDiffer>
    <experiments>4</experiments>
</comment>
<comment type="interaction">
    <interactant intactId="EBI-746012">
        <id>Q92841</id>
    </interactant>
    <interactant intactId="EBI-372899">
        <id>Q13148</id>
        <label>TARDBP</label>
    </interactant>
    <organismsDiffer>false</organismsDiffer>
    <experiments>6</experiments>
</comment>
<comment type="interaction">
    <interactant intactId="EBI-746012">
        <id>Q92841</id>
    </interactant>
    <interactant intactId="EBI-366083">
        <id>P04637</id>
        <label>TP53</label>
    </interactant>
    <organismsDiffer>false</organismsDiffer>
    <experiments>3</experiments>
</comment>
<comment type="interaction">
    <interactant intactId="EBI-746012">
        <id>Q92841</id>
    </interactant>
    <interactant intactId="EBI-1044059">
        <id>P46937</id>
        <label>YAP1</label>
    </interactant>
    <organismsDiffer>false</organismsDiffer>
    <experiments>7</experiments>
</comment>
<comment type="interaction">
    <interactant intactId="EBI-746012">
        <id>Q92841</id>
    </interactant>
    <interactant intactId="EBI-6452221">
        <id>Q9JKL7</id>
        <label>Srek1</label>
    </interactant>
    <organismsDiffer>true</organismsDiffer>
    <experiments>3</experiments>
</comment>
<comment type="interaction">
    <interactant intactId="EBI-746012">
        <id>Q92841</id>
    </interactant>
    <interactant intactId="EBI-8860250">
        <id>Q8K3Y6</id>
        <label>Zc3hav1</label>
    </interactant>
    <organismsDiffer>true</organismsDiffer>
    <experiments>6</experiments>
</comment>
<comment type="interaction">
    <interactant intactId="EBI-5280703">
        <id>Q92841-4</id>
    </interactant>
    <interactant intactId="EBI-301834">
        <id>Q13547</id>
        <label>HDAC1</label>
    </interactant>
    <organismsDiffer>false</organismsDiffer>
    <experiments>3</experiments>
</comment>
<comment type="subcellular location">
    <subcellularLocation>
        <location evidence="6 7 12 14 18 22 27 30">Nucleus</location>
    </subcellularLocation>
    <subcellularLocation>
        <location evidence="12 22">Nucleus</location>
        <location evidence="12 22">Nucleolus</location>
    </subcellularLocation>
    <subcellularLocation>
        <location evidence="30">Cytoplasm</location>
        <location evidence="30">Cytosol</location>
    </subcellularLocation>
    <text evidence="30">In the course of bunyavirus infection, relocalizes from the nucleus to the cytosol where it binds viral RNA to antagonize replication.</text>
</comment>
<comment type="alternative products">
    <event type="alternative splicing"/>
    <event type="alternative initiation"/>
    <isoform>
        <id>Q92841-4</id>
        <name>1</name>
        <name>p82</name>
        <sequence type="displayed"/>
    </isoform>
    <isoform>
        <id>Q92841-1</id>
        <name>2</name>
        <name>p72</name>
        <sequence type="described" ref="VSP_042527"/>
    </isoform>
    <isoform>
        <id>Q92841-2</id>
        <name>3</name>
        <sequence type="described" ref="VSP_042527 VSP_042528"/>
    </isoform>
    <isoform>
        <id>Q92841-3</id>
        <name>4</name>
        <sequence type="described" ref="VSP_042527 VSP_042529"/>
    </isoform>
</comment>
<comment type="tissue specificity">
    <text evidence="14 34">Widely expressed (PubMed:8871553). Low expression, if any, in normal colonic epithelial cells (at protein level). Levels tend to increase during colon cancer progression, from very low in benign hyperplastic polyps to very high in tubular and villous adenomas (PubMed:17699760).</text>
</comment>
<comment type="PTM">
    <text evidence="18">Sumoylation significantly increases stability. It also promotes interaction specifically with HDAC1 (but not HDAC2, nor HDAC3) and strongly stimulates ESR1 and TP53 coactivation.</text>
</comment>
<comment type="PTM">
    <text evidence="20">Acetylation at lysine residues stabilizes the protein, stimulates interaction with HDAC1 and HDAC3, but not HDAC2, and represses ESR1 and TP53 coactivation activity.</text>
</comment>
<comment type="miscellaneous">
    <molecule>Isoform 1</molecule>
    <text>Starts at an alternative CUG codon.</text>
</comment>
<comment type="miscellaneous">
    <molecule>Isoform 2</molecule>
    <text evidence="39">Produced by alternative initiation at Met-80 of isoform 1.</text>
</comment>
<comment type="miscellaneous">
    <molecule>Isoform 3</molecule>
    <text evidence="39">Produced by alternative splicing of isoform 2.</text>
</comment>
<comment type="miscellaneous">
    <molecule>Isoform 4</molecule>
    <text evidence="39">Produced by alternative splicing of isoform 2.</text>
</comment>
<comment type="similarity">
    <text evidence="39">Belongs to the DEAD box helicase family. DDX5/DBP2 subfamily.</text>
</comment>
<comment type="caution">
    <text evidence="5 18 19 20 26">Was reported to act as a transcriptional coactivator for estrogen receptor ESR1 (PubMed:11250900). Although this publication was retracted because of aberrations in some figures, this function was also described in other publications by different groups and may be real (PubMed:19995069, PubMed:20406972, PubMed:20663877, PubMed:24275493).</text>
</comment>
<organism>
    <name type="scientific">Homo sapiens</name>
    <name type="common">Human</name>
    <dbReference type="NCBI Taxonomy" id="9606"/>
    <lineage>
        <taxon>Eukaryota</taxon>
        <taxon>Metazoa</taxon>
        <taxon>Chordata</taxon>
        <taxon>Craniata</taxon>
        <taxon>Vertebrata</taxon>
        <taxon>Euteleostomi</taxon>
        <taxon>Mammalia</taxon>
        <taxon>Eutheria</taxon>
        <taxon>Euarchontoglires</taxon>
        <taxon>Primates</taxon>
        <taxon>Haplorrhini</taxon>
        <taxon>Catarrhini</taxon>
        <taxon>Hominidae</taxon>
        <taxon>Homo</taxon>
    </lineage>
</organism>
<gene>
    <name type="primary">DDX17</name>
</gene>
<protein>
    <recommendedName>
        <fullName>Probable ATP-dependent RNA helicase DDX17</fullName>
        <ecNumber>3.6.4.13</ecNumber>
    </recommendedName>
    <alternativeName>
        <fullName>DEAD box protein 17</fullName>
    </alternativeName>
    <alternativeName>
        <fullName>DEAD box protein p72</fullName>
    </alternativeName>
    <alternativeName>
        <fullName evidence="37">DEAD box protein p82</fullName>
    </alternativeName>
    <alternativeName>
        <fullName>RNA-dependent helicase p72</fullName>
    </alternativeName>
</protein>
<accession>Q92841</accession>
<accession>B1AHM0</accession>
<accession>H3BLZ8</accession>
<accession>Q69YT1</accession>
<accession>Q6ICD6</accession>
<dbReference type="EC" id="3.6.4.13"/>
<dbReference type="EMBL" id="U59321">
    <property type="protein sequence ID" value="AAC50787.1"/>
    <property type="molecule type" value="mRNA"/>
</dbReference>
<dbReference type="EMBL" id="CR456432">
    <property type="protein sequence ID" value="CAG30318.1"/>
    <property type="molecule type" value="mRNA"/>
</dbReference>
<dbReference type="EMBL" id="AL713763">
    <property type="protein sequence ID" value="CAH10627.2"/>
    <property type="molecule type" value="mRNA"/>
</dbReference>
<dbReference type="EMBL" id="Z97056">
    <property type="status" value="NOT_ANNOTATED_CDS"/>
    <property type="molecule type" value="Genomic_DNA"/>
</dbReference>
<dbReference type="EMBL" id="CH471095">
    <property type="protein sequence ID" value="EAW60243.1"/>
    <property type="molecule type" value="Genomic_DNA"/>
</dbReference>
<dbReference type="EMBL" id="BC000595">
    <property type="protein sequence ID" value="AAH00595.2"/>
    <property type="molecule type" value="mRNA"/>
</dbReference>
<dbReference type="CCDS" id="CCDS33646.1">
    <molecule id="Q92841-4"/>
</dbReference>
<dbReference type="PIR" id="S72367">
    <property type="entry name" value="S72367"/>
</dbReference>
<dbReference type="RefSeq" id="NP_006377.2">
    <molecule id="Q92841-4"/>
    <property type="nucleotide sequence ID" value="NM_006386.4"/>
</dbReference>
<dbReference type="PDB" id="6UV0">
    <property type="method" value="X-ray"/>
    <property type="resolution" value="2.60 A"/>
    <property type="chains" value="A/B=111-556"/>
</dbReference>
<dbReference type="PDB" id="6UV1">
    <property type="method" value="X-ray"/>
    <property type="resolution" value="2.31 A"/>
    <property type="chains" value="A/B=111-556"/>
</dbReference>
<dbReference type="PDB" id="6UV2">
    <property type="method" value="X-ray"/>
    <property type="resolution" value="1.89 A"/>
    <property type="chains" value="A=111-556"/>
</dbReference>
<dbReference type="PDB" id="6UV3">
    <property type="method" value="X-ray"/>
    <property type="resolution" value="1.60 A"/>
    <property type="chains" value="A=111-556"/>
</dbReference>
<dbReference type="PDB" id="6UV4">
    <property type="method" value="X-ray"/>
    <property type="resolution" value="1.70 A"/>
    <property type="chains" value="A=111-556"/>
</dbReference>
<dbReference type="PDBsum" id="6UV0"/>
<dbReference type="PDBsum" id="6UV1"/>
<dbReference type="PDBsum" id="6UV2"/>
<dbReference type="PDBsum" id="6UV3"/>
<dbReference type="PDBsum" id="6UV4"/>
<dbReference type="SMR" id="Q92841"/>
<dbReference type="BioGRID" id="115776">
    <property type="interactions" value="426"/>
</dbReference>
<dbReference type="CORUM" id="Q92841"/>
<dbReference type="DIP" id="DIP-29843N"/>
<dbReference type="FunCoup" id="Q92841">
    <property type="interactions" value="3654"/>
</dbReference>
<dbReference type="IntAct" id="Q92841">
    <property type="interactions" value="171"/>
</dbReference>
<dbReference type="MINT" id="Q92841"/>
<dbReference type="STRING" id="9606.ENSP00000380033"/>
<dbReference type="BindingDB" id="Q92841"/>
<dbReference type="ChEMBL" id="CHEMBL4105760"/>
<dbReference type="GlyCosmos" id="Q92841">
    <property type="glycosylation" value="12 sites, 2 glycans"/>
</dbReference>
<dbReference type="GlyGen" id="Q92841">
    <property type="glycosylation" value="13 sites, 2 O-linked glycans (13 sites)"/>
</dbReference>
<dbReference type="iPTMnet" id="Q92841"/>
<dbReference type="MetOSite" id="Q92841"/>
<dbReference type="PhosphoSitePlus" id="Q92841"/>
<dbReference type="SwissPalm" id="Q92841"/>
<dbReference type="BioMuta" id="DDX17"/>
<dbReference type="REPRODUCTION-2DPAGE" id="IPI00023785"/>
<dbReference type="CPTAC" id="CPTAC-351"/>
<dbReference type="CPTAC" id="CPTAC-352"/>
<dbReference type="jPOST" id="Q92841"/>
<dbReference type="MassIVE" id="Q92841"/>
<dbReference type="PaxDb" id="9606-ENSP00000380033"/>
<dbReference type="PeptideAtlas" id="Q92841"/>
<dbReference type="ProteomicsDB" id="40772"/>
<dbReference type="ProteomicsDB" id="75531">
    <molecule id="Q92841-4"/>
</dbReference>
<dbReference type="ProteomicsDB" id="75532">
    <molecule id="Q92841-1"/>
</dbReference>
<dbReference type="ProteomicsDB" id="75533">
    <molecule id="Q92841-2"/>
</dbReference>
<dbReference type="ProteomicsDB" id="75534">
    <molecule id="Q92841-3"/>
</dbReference>
<dbReference type="Pumba" id="Q92841"/>
<dbReference type="TopDownProteomics" id="Q92841-1">
    <molecule id="Q92841-1"/>
</dbReference>
<dbReference type="TopDownProteomics" id="Q92841-4">
    <molecule id="Q92841-4"/>
</dbReference>
<dbReference type="Antibodypedia" id="26352">
    <property type="antibodies" value="241 antibodies from 29 providers"/>
</dbReference>
<dbReference type="DNASU" id="10521"/>
<dbReference type="Ensembl" id="ENST00000403230.3">
    <molecule id="Q92841-4"/>
    <property type="protein sequence ID" value="ENSP00000385536.2"/>
    <property type="gene ID" value="ENSG00000100201.23"/>
</dbReference>
<dbReference type="GeneID" id="10521"/>
<dbReference type="KEGG" id="hsa:10521"/>
<dbReference type="MANE-Select" id="ENST00000403230.3">
    <property type="protein sequence ID" value="ENSP00000385536.2"/>
    <property type="RefSeq nucleotide sequence ID" value="NM_006386.5"/>
    <property type="RefSeq protein sequence ID" value="NP_006377.2"/>
</dbReference>
<dbReference type="UCSC" id="uc062efr.1">
    <property type="organism name" value="human"/>
</dbReference>
<dbReference type="UCSC" id="uc062efu.1">
    <molecule id="Q92841-4"/>
    <property type="organism name" value="human"/>
</dbReference>
<dbReference type="AGR" id="HGNC:2740"/>
<dbReference type="CTD" id="10521"/>
<dbReference type="DisGeNET" id="10521"/>
<dbReference type="GeneCards" id="DDX17"/>
<dbReference type="HGNC" id="HGNC:2740">
    <property type="gene designation" value="DDX17"/>
</dbReference>
<dbReference type="HPA" id="ENSG00000100201">
    <property type="expression patterns" value="Low tissue specificity"/>
</dbReference>
<dbReference type="MIM" id="608469">
    <property type="type" value="gene"/>
</dbReference>
<dbReference type="neXtProt" id="NX_Q92841"/>
<dbReference type="OpenTargets" id="ENSG00000100201"/>
<dbReference type="PharmGKB" id="PA27206"/>
<dbReference type="VEuPathDB" id="HostDB:ENSG00000100201"/>
<dbReference type="eggNOG" id="KOG0331">
    <property type="taxonomic scope" value="Eukaryota"/>
</dbReference>
<dbReference type="GeneTree" id="ENSGT00940000160049"/>
<dbReference type="HOGENOM" id="CLU_003041_16_4_1"/>
<dbReference type="InParanoid" id="Q92841"/>
<dbReference type="OMA" id="MGQTANY"/>
<dbReference type="OrthoDB" id="196131at2759"/>
<dbReference type="PAN-GO" id="Q92841">
    <property type="GO annotations" value="5 GO annotations based on evolutionary models"/>
</dbReference>
<dbReference type="TreeFam" id="TF300332"/>
<dbReference type="BRENDA" id="3.6.4.13">
    <property type="organism ID" value="2681"/>
</dbReference>
<dbReference type="PathwayCommons" id="Q92841"/>
<dbReference type="Reactome" id="R-HSA-3899300">
    <property type="pathway name" value="SUMOylation of transcription cofactors"/>
</dbReference>
<dbReference type="SignaLink" id="Q92841"/>
<dbReference type="SIGNOR" id="Q92841"/>
<dbReference type="BioGRID-ORCS" id="10521">
    <property type="hits" value="89 hits in 1089 CRISPR screens"/>
</dbReference>
<dbReference type="CD-CODE" id="232F8A39">
    <property type="entry name" value="P-body"/>
</dbReference>
<dbReference type="CD-CODE" id="91857CE7">
    <property type="entry name" value="Nucleolus"/>
</dbReference>
<dbReference type="CD-CODE" id="FB4E32DD">
    <property type="entry name" value="Presynaptic clusters and postsynaptic densities"/>
</dbReference>
<dbReference type="ChiTaRS" id="DDX17">
    <property type="organism name" value="human"/>
</dbReference>
<dbReference type="GeneWiki" id="DDX17"/>
<dbReference type="GenomeRNAi" id="10521"/>
<dbReference type="Pharos" id="Q92841">
    <property type="development level" value="Tbio"/>
</dbReference>
<dbReference type="PRO" id="PR:Q92841"/>
<dbReference type="Proteomes" id="UP000005640">
    <property type="component" value="Chromosome 22"/>
</dbReference>
<dbReference type="RNAct" id="Q92841">
    <property type="molecule type" value="protein"/>
</dbReference>
<dbReference type="Bgee" id="ENSG00000100201">
    <property type="expression patterns" value="Expressed in tibia and 204 other cell types or tissues"/>
</dbReference>
<dbReference type="ExpressionAtlas" id="Q92841">
    <property type="expression patterns" value="baseline and differential"/>
</dbReference>
<dbReference type="GO" id="GO:0005737">
    <property type="term" value="C:cytoplasm"/>
    <property type="evidence" value="ECO:0000318"/>
    <property type="project" value="GO_Central"/>
</dbReference>
<dbReference type="GO" id="GO:0005829">
    <property type="term" value="C:cytosol"/>
    <property type="evidence" value="ECO:0007669"/>
    <property type="project" value="UniProtKB-SubCell"/>
</dbReference>
<dbReference type="GO" id="GO:0016020">
    <property type="term" value="C:membrane"/>
    <property type="evidence" value="ECO:0007005"/>
    <property type="project" value="UniProtKB"/>
</dbReference>
<dbReference type="GO" id="GO:0016607">
    <property type="term" value="C:nuclear speck"/>
    <property type="evidence" value="ECO:0000314"/>
    <property type="project" value="HPA"/>
</dbReference>
<dbReference type="GO" id="GO:0005730">
    <property type="term" value="C:nucleolus"/>
    <property type="evidence" value="ECO:0007669"/>
    <property type="project" value="UniProtKB-SubCell"/>
</dbReference>
<dbReference type="GO" id="GO:0005654">
    <property type="term" value="C:nucleoplasm"/>
    <property type="evidence" value="ECO:0000304"/>
    <property type="project" value="Reactome"/>
</dbReference>
<dbReference type="GO" id="GO:0005634">
    <property type="term" value="C:nucleus"/>
    <property type="evidence" value="ECO:0000314"/>
    <property type="project" value="UniProtKB"/>
</dbReference>
<dbReference type="GO" id="GO:1990904">
    <property type="term" value="C:ribonucleoprotein complex"/>
    <property type="evidence" value="ECO:0000318"/>
    <property type="project" value="GO_Central"/>
</dbReference>
<dbReference type="GO" id="GO:0005524">
    <property type="term" value="F:ATP binding"/>
    <property type="evidence" value="ECO:0007669"/>
    <property type="project" value="UniProtKB-KW"/>
</dbReference>
<dbReference type="GO" id="GO:0016887">
    <property type="term" value="F:ATP hydrolysis activity"/>
    <property type="evidence" value="ECO:0007669"/>
    <property type="project" value="RHEA"/>
</dbReference>
<dbReference type="GO" id="GO:0008186">
    <property type="term" value="F:ATP-dependent activity, acting on RNA"/>
    <property type="evidence" value="ECO:0000304"/>
    <property type="project" value="ProtInc"/>
</dbReference>
<dbReference type="GO" id="GO:0003729">
    <property type="term" value="F:mRNA binding"/>
    <property type="evidence" value="ECO:0000318"/>
    <property type="project" value="GO_Central"/>
</dbReference>
<dbReference type="GO" id="GO:0003723">
    <property type="term" value="F:RNA binding"/>
    <property type="evidence" value="ECO:0007005"/>
    <property type="project" value="UniProtKB"/>
</dbReference>
<dbReference type="GO" id="GO:0003724">
    <property type="term" value="F:RNA helicase activity"/>
    <property type="evidence" value="ECO:0000318"/>
    <property type="project" value="GO_Central"/>
</dbReference>
<dbReference type="GO" id="GO:0003713">
    <property type="term" value="F:transcription coactivator activity"/>
    <property type="evidence" value="ECO:0000314"/>
    <property type="project" value="UniProtKB"/>
</dbReference>
<dbReference type="GO" id="GO:0000380">
    <property type="term" value="P:alternative mRNA splicing, via spliceosome"/>
    <property type="evidence" value="ECO:0000315"/>
    <property type="project" value="UniProtKB"/>
</dbReference>
<dbReference type="GO" id="GO:0030521">
    <property type="term" value="P:androgen receptor signaling pathway"/>
    <property type="evidence" value="ECO:0000315"/>
    <property type="project" value="UniProtKB"/>
</dbReference>
<dbReference type="GO" id="GO:0051607">
    <property type="term" value="P:defense response to virus"/>
    <property type="evidence" value="ECO:0007669"/>
    <property type="project" value="UniProtKB-KW"/>
</dbReference>
<dbReference type="GO" id="GO:0001837">
    <property type="term" value="P:epithelial to mesenchymal transition"/>
    <property type="evidence" value="ECO:0000315"/>
    <property type="project" value="UniProtKB"/>
</dbReference>
<dbReference type="GO" id="GO:0030520">
    <property type="term" value="P:estrogen receptor signaling pathway"/>
    <property type="evidence" value="ECO:0000315"/>
    <property type="project" value="UniProtKB"/>
</dbReference>
<dbReference type="GO" id="GO:0002376">
    <property type="term" value="P:immune system process"/>
    <property type="evidence" value="ECO:0007669"/>
    <property type="project" value="UniProtKB-KW"/>
</dbReference>
<dbReference type="GO" id="GO:0010586">
    <property type="term" value="P:miRNA metabolic process"/>
    <property type="evidence" value="ECO:0000315"/>
    <property type="project" value="UniProtKB"/>
</dbReference>
<dbReference type="GO" id="GO:0045445">
    <property type="term" value="P:myoblast differentiation"/>
    <property type="evidence" value="ECO:0000250"/>
    <property type="project" value="UniProtKB"/>
</dbReference>
<dbReference type="GO" id="GO:0045944">
    <property type="term" value="P:positive regulation of transcription by RNA polymerase II"/>
    <property type="evidence" value="ECO:0000314"/>
    <property type="project" value="UniProtKB"/>
</dbReference>
<dbReference type="GO" id="GO:0000381">
    <property type="term" value="P:regulation of alternative mRNA splicing, via spliceosome"/>
    <property type="evidence" value="ECO:0000315"/>
    <property type="project" value="UniProtKB"/>
</dbReference>
<dbReference type="GO" id="GO:2001014">
    <property type="term" value="P:regulation of skeletal muscle cell differentiation"/>
    <property type="evidence" value="ECO:0000315"/>
    <property type="project" value="UniProtKB"/>
</dbReference>
<dbReference type="GO" id="GO:0006357">
    <property type="term" value="P:regulation of transcription by RNA polymerase II"/>
    <property type="evidence" value="ECO:0000315"/>
    <property type="project" value="UniProtKB"/>
</dbReference>
<dbReference type="GO" id="GO:0031047">
    <property type="term" value="P:regulatory ncRNA-mediated gene silencing"/>
    <property type="evidence" value="ECO:0007669"/>
    <property type="project" value="UniProtKB-KW"/>
</dbReference>
<dbReference type="GO" id="GO:0006396">
    <property type="term" value="P:RNA processing"/>
    <property type="evidence" value="ECO:0000304"/>
    <property type="project" value="ProtInc"/>
</dbReference>
<dbReference type="GO" id="GO:0006364">
    <property type="term" value="P:rRNA processing"/>
    <property type="evidence" value="ECO:0007669"/>
    <property type="project" value="UniProtKB-KW"/>
</dbReference>
<dbReference type="CDD" id="cd18050">
    <property type="entry name" value="DEADc_DDX17"/>
    <property type="match status" value="1"/>
</dbReference>
<dbReference type="CDD" id="cd18787">
    <property type="entry name" value="SF2_C_DEAD"/>
    <property type="match status" value="1"/>
</dbReference>
<dbReference type="FunFam" id="3.40.50.300:FF:000008">
    <property type="entry name" value="ATP-dependent RNA helicase RhlB"/>
    <property type="match status" value="1"/>
</dbReference>
<dbReference type="FunFam" id="3.40.50.300:FF:000079">
    <property type="entry name" value="probable ATP-dependent RNA helicase DDX17"/>
    <property type="match status" value="1"/>
</dbReference>
<dbReference type="Gene3D" id="3.40.50.300">
    <property type="entry name" value="P-loop containing nucleotide triphosphate hydrolases"/>
    <property type="match status" value="2"/>
</dbReference>
<dbReference type="InterPro" id="IPR046330">
    <property type="entry name" value="DDX17_ATP-bd-dom"/>
</dbReference>
<dbReference type="InterPro" id="IPR011545">
    <property type="entry name" value="DEAD/DEAH_box_helicase_dom"/>
</dbReference>
<dbReference type="InterPro" id="IPR014001">
    <property type="entry name" value="Helicase_ATP-bd"/>
</dbReference>
<dbReference type="InterPro" id="IPR001650">
    <property type="entry name" value="Helicase_C-like"/>
</dbReference>
<dbReference type="InterPro" id="IPR027417">
    <property type="entry name" value="P-loop_NTPase"/>
</dbReference>
<dbReference type="InterPro" id="IPR000629">
    <property type="entry name" value="RNA-helicase_DEAD-box_CS"/>
</dbReference>
<dbReference type="InterPro" id="IPR014014">
    <property type="entry name" value="RNA_helicase_DEAD_Q_motif"/>
</dbReference>
<dbReference type="PANTHER" id="PTHR47958">
    <property type="entry name" value="ATP-DEPENDENT RNA HELICASE DBP3"/>
    <property type="match status" value="1"/>
</dbReference>
<dbReference type="Pfam" id="PF00270">
    <property type="entry name" value="DEAD"/>
    <property type="match status" value="1"/>
</dbReference>
<dbReference type="Pfam" id="PF00271">
    <property type="entry name" value="Helicase_C"/>
    <property type="match status" value="1"/>
</dbReference>
<dbReference type="SMART" id="SM00487">
    <property type="entry name" value="DEXDc"/>
    <property type="match status" value="1"/>
</dbReference>
<dbReference type="SMART" id="SM00490">
    <property type="entry name" value="HELICc"/>
    <property type="match status" value="1"/>
</dbReference>
<dbReference type="SUPFAM" id="SSF52540">
    <property type="entry name" value="P-loop containing nucleoside triphosphate hydrolases"/>
    <property type="match status" value="1"/>
</dbReference>
<dbReference type="PROSITE" id="PS00039">
    <property type="entry name" value="DEAD_ATP_HELICASE"/>
    <property type="match status" value="1"/>
</dbReference>
<dbReference type="PROSITE" id="PS51192">
    <property type="entry name" value="HELICASE_ATP_BIND_1"/>
    <property type="match status" value="1"/>
</dbReference>
<dbReference type="PROSITE" id="PS51194">
    <property type="entry name" value="HELICASE_CTER"/>
    <property type="match status" value="1"/>
</dbReference>
<dbReference type="PROSITE" id="PS51195">
    <property type="entry name" value="Q_MOTIF"/>
    <property type="match status" value="1"/>
</dbReference>
<sequence length="729" mass="80272">MPTGFVAPILCVLLPSPTREAATVASATGDSASERESAAPAAAPTAEAPPPSVVTRPEPQALPSPAIRAPLPDLYPFGTMRGGGFGDRDRDRDRGGFGARGGGGLPPKKFGNPGERLRKKKWDLSELPKFEKNFYVEHPEVARLTPYEVDELRRKKEITVRGGDVCPKPVFAFHHANFPQYVMDVLMDQHFTEPTPIQCQGFPLALSGRDMVGIAQTGSGKTLAYLLPAIVHINHQPYLERGDGPICLVLAPTRELAQQVQQVADDYGKCSRLKSTCIYGGAPKGPQIRDLERGVEICIATPGRLIDFLESGKTNLRRCTYLVLDEADRMLDMGFEPQIRKIVDQIRPDRQTLMWSATWPKEVRQLAEDFLRDYTQINVGNLELSANHNILQIVDVCMESEKDHKLIQLMEEIMAEKENKTIIFVETKRRCDDLTRRMRRDGWPAMCIHGDKSQPERDWVLNEFRSGKAPILIATDVASRGLDVEDVKFVINYDYPNSSEDYVHRIGRTARSTNKGTAYTFFTPGNLKQARELIKVLEEANQAINPKLMQLVDHRGGGGGGGGRSRYRTTSSANNPNLMYQDECDRRLRGVKDGGRRDSASYRDRSETDRAGYANGSGYGSPNSAFGAQAGQYTYGQGTYGAAAYGTSSYTAQEYGAGTYGASSTTSTGRSSQSSSQQFSGIGRSGQQPQPLMSQQFAQPPGATNMIGYMGQTAYQYPPPPPPPPPSRK</sequence>
<reference key="1">
    <citation type="journal article" date="1996" name="Nucleic Acids Res.">
        <title>p72: a human nuclear DEAD box protein highly related to p68.</title>
        <authorList>
            <person name="Lamm G.M."/>
            <person name="Nicol S.M."/>
            <person name="Fuller-Pace F.V."/>
            <person name="Lamond A.I."/>
        </authorList>
    </citation>
    <scope>NUCLEOTIDE SEQUENCE [MRNA] (ISOFORM 2)</scope>
    <scope>CATALYTIC ACTIVITY</scope>
    <scope>BIOPHYSICOCHEMICAL PROPERTIES</scope>
    <scope>TISSUE SPECIFICITY</scope>
</reference>
<reference key="2">
    <citation type="journal article" date="2004" name="Genome Biol.">
        <title>A genome annotation-driven approach to cloning the human ORFeome.</title>
        <authorList>
            <person name="Collins J.E."/>
            <person name="Wright C.L."/>
            <person name="Edwards C.A."/>
            <person name="Davis M.P."/>
            <person name="Grinham J.A."/>
            <person name="Cole C.G."/>
            <person name="Goward M.E."/>
            <person name="Aguado B."/>
            <person name="Mallya M."/>
            <person name="Mokrab Y."/>
            <person name="Huckle E.J."/>
            <person name="Beare D.M."/>
            <person name="Dunham I."/>
        </authorList>
    </citation>
    <scope>NUCLEOTIDE SEQUENCE [LARGE SCALE MRNA] (ISOFORM 4)</scope>
</reference>
<reference key="3">
    <citation type="journal article" date="2007" name="BMC Genomics">
        <title>The full-ORF clone resource of the German cDNA consortium.</title>
        <authorList>
            <person name="Bechtel S."/>
            <person name="Rosenfelder H."/>
            <person name="Duda A."/>
            <person name="Schmidt C.P."/>
            <person name="Ernst U."/>
            <person name="Wellenreuther R."/>
            <person name="Mehrle A."/>
            <person name="Schuster C."/>
            <person name="Bahr A."/>
            <person name="Bloecker H."/>
            <person name="Heubner D."/>
            <person name="Hoerlein A."/>
            <person name="Michel G."/>
            <person name="Wedler H."/>
            <person name="Koehrer K."/>
            <person name="Ottenwaelder B."/>
            <person name="Poustka A."/>
            <person name="Wiemann S."/>
            <person name="Schupp I."/>
        </authorList>
    </citation>
    <scope>NUCLEOTIDE SEQUENCE [LARGE SCALE MRNA] (ISOFORM 3)</scope>
    <source>
        <tissue>Amygdala</tissue>
    </source>
</reference>
<reference key="4">
    <citation type="journal article" date="1999" name="Nature">
        <title>The DNA sequence of human chromosome 22.</title>
        <authorList>
            <person name="Dunham I."/>
            <person name="Hunt A.R."/>
            <person name="Collins J.E."/>
            <person name="Bruskiewich R."/>
            <person name="Beare D.M."/>
            <person name="Clamp M."/>
            <person name="Smink L.J."/>
            <person name="Ainscough R."/>
            <person name="Almeida J.P."/>
            <person name="Babbage A.K."/>
            <person name="Bagguley C."/>
            <person name="Bailey J."/>
            <person name="Barlow K.F."/>
            <person name="Bates K.N."/>
            <person name="Beasley O.P."/>
            <person name="Bird C.P."/>
            <person name="Blakey S.E."/>
            <person name="Bridgeman A.M."/>
            <person name="Buck D."/>
            <person name="Burgess J."/>
            <person name="Burrill W.D."/>
            <person name="Burton J."/>
            <person name="Carder C."/>
            <person name="Carter N.P."/>
            <person name="Chen Y."/>
            <person name="Clark G."/>
            <person name="Clegg S.M."/>
            <person name="Cobley V.E."/>
            <person name="Cole C.G."/>
            <person name="Collier R.E."/>
            <person name="Connor R."/>
            <person name="Conroy D."/>
            <person name="Corby N.R."/>
            <person name="Coville G.J."/>
            <person name="Cox A.V."/>
            <person name="Davis J."/>
            <person name="Dawson E."/>
            <person name="Dhami P.D."/>
            <person name="Dockree C."/>
            <person name="Dodsworth S.J."/>
            <person name="Durbin R.M."/>
            <person name="Ellington A.G."/>
            <person name="Evans K.L."/>
            <person name="Fey J.M."/>
            <person name="Fleming K."/>
            <person name="French L."/>
            <person name="Garner A.A."/>
            <person name="Gilbert J.G.R."/>
            <person name="Goward M.E."/>
            <person name="Grafham D.V."/>
            <person name="Griffiths M.N.D."/>
            <person name="Hall C."/>
            <person name="Hall R.E."/>
            <person name="Hall-Tamlyn G."/>
            <person name="Heathcott R.W."/>
            <person name="Ho S."/>
            <person name="Holmes S."/>
            <person name="Hunt S.E."/>
            <person name="Jones M.C."/>
            <person name="Kershaw J."/>
            <person name="Kimberley A.M."/>
            <person name="King A."/>
            <person name="Laird G.K."/>
            <person name="Langford C.F."/>
            <person name="Leversha M.A."/>
            <person name="Lloyd C."/>
            <person name="Lloyd D.M."/>
            <person name="Martyn I.D."/>
            <person name="Mashreghi-Mohammadi M."/>
            <person name="Matthews L.H."/>
            <person name="Mccann O.T."/>
            <person name="Mcclay J."/>
            <person name="Mclaren S."/>
            <person name="McMurray A.A."/>
            <person name="Milne S.A."/>
            <person name="Mortimore B.J."/>
            <person name="Odell C.N."/>
            <person name="Pavitt R."/>
            <person name="Pearce A.V."/>
            <person name="Pearson D."/>
            <person name="Phillimore B.J.C.T."/>
            <person name="Phillips S.H."/>
            <person name="Plumb R.W."/>
            <person name="Ramsay H."/>
            <person name="Ramsey Y."/>
            <person name="Rogers L."/>
            <person name="Ross M.T."/>
            <person name="Scott C.E."/>
            <person name="Sehra H.K."/>
            <person name="Skuce C.D."/>
            <person name="Smalley S."/>
            <person name="Smith M.L."/>
            <person name="Soderlund C."/>
            <person name="Spragon L."/>
            <person name="Steward C.A."/>
            <person name="Sulston J.E."/>
            <person name="Swann R.M."/>
            <person name="Vaudin M."/>
            <person name="Wall M."/>
            <person name="Wallis J.M."/>
            <person name="Whiteley M.N."/>
            <person name="Willey D.L."/>
            <person name="Williams L."/>
            <person name="Williams S.A."/>
            <person name="Williamson H."/>
            <person name="Wilmer T.E."/>
            <person name="Wilming L."/>
            <person name="Wright C.L."/>
            <person name="Hubbard T."/>
            <person name="Bentley D.R."/>
            <person name="Beck S."/>
            <person name="Rogers J."/>
            <person name="Shimizu N."/>
            <person name="Minoshima S."/>
            <person name="Kawasaki K."/>
            <person name="Sasaki T."/>
            <person name="Asakawa S."/>
            <person name="Kudoh J."/>
            <person name="Shintani A."/>
            <person name="Shibuya K."/>
            <person name="Yoshizaki Y."/>
            <person name="Aoki N."/>
            <person name="Mitsuyama S."/>
            <person name="Roe B.A."/>
            <person name="Chen F."/>
            <person name="Chu L."/>
            <person name="Crabtree J."/>
            <person name="Deschamps S."/>
            <person name="Do A."/>
            <person name="Do T."/>
            <person name="Dorman A."/>
            <person name="Fang F."/>
            <person name="Fu Y."/>
            <person name="Hu P."/>
            <person name="Hua A."/>
            <person name="Kenton S."/>
            <person name="Lai H."/>
            <person name="Lao H.I."/>
            <person name="Lewis J."/>
            <person name="Lewis S."/>
            <person name="Lin S.-P."/>
            <person name="Loh P."/>
            <person name="Malaj E."/>
            <person name="Nguyen T."/>
            <person name="Pan H."/>
            <person name="Phan S."/>
            <person name="Qi S."/>
            <person name="Qian Y."/>
            <person name="Ray L."/>
            <person name="Ren Q."/>
            <person name="Shaull S."/>
            <person name="Sloan D."/>
            <person name="Song L."/>
            <person name="Wang Q."/>
            <person name="Wang Y."/>
            <person name="Wang Z."/>
            <person name="White J."/>
            <person name="Willingham D."/>
            <person name="Wu H."/>
            <person name="Yao Z."/>
            <person name="Zhan M."/>
            <person name="Zhang G."/>
            <person name="Chissoe S."/>
            <person name="Murray J."/>
            <person name="Miller N."/>
            <person name="Minx P."/>
            <person name="Fulton R."/>
            <person name="Johnson D."/>
            <person name="Bemis G."/>
            <person name="Bentley D."/>
            <person name="Bradshaw H."/>
            <person name="Bourne S."/>
            <person name="Cordes M."/>
            <person name="Du Z."/>
            <person name="Fulton L."/>
            <person name="Goela D."/>
            <person name="Graves T."/>
            <person name="Hawkins J."/>
            <person name="Hinds K."/>
            <person name="Kemp K."/>
            <person name="Latreille P."/>
            <person name="Layman D."/>
            <person name="Ozersky P."/>
            <person name="Rohlfing T."/>
            <person name="Scheet P."/>
            <person name="Walker C."/>
            <person name="Wamsley A."/>
            <person name="Wohldmann P."/>
            <person name="Pepin K."/>
            <person name="Nelson J."/>
            <person name="Korf I."/>
            <person name="Bedell J.A."/>
            <person name="Hillier L.W."/>
            <person name="Mardis E."/>
            <person name="Waterston R."/>
            <person name="Wilson R."/>
            <person name="Emanuel B.S."/>
            <person name="Shaikh T."/>
            <person name="Kurahashi H."/>
            <person name="Saitta S."/>
            <person name="Budarf M.L."/>
            <person name="McDermid H.E."/>
            <person name="Johnson A."/>
            <person name="Wong A.C.C."/>
            <person name="Morrow B.E."/>
            <person name="Edelmann L."/>
            <person name="Kim U.J."/>
            <person name="Shizuya H."/>
            <person name="Simon M.I."/>
            <person name="Dumanski J.P."/>
            <person name="Peyrard M."/>
            <person name="Kedra D."/>
            <person name="Seroussi E."/>
            <person name="Fransson I."/>
            <person name="Tapia I."/>
            <person name="Bruder C.E."/>
            <person name="O'Brien K.P."/>
            <person name="Wilkinson P."/>
            <person name="Bodenteich A."/>
            <person name="Hartman K."/>
            <person name="Hu X."/>
            <person name="Khan A.S."/>
            <person name="Lane L."/>
            <person name="Tilahun Y."/>
            <person name="Wright H."/>
        </authorList>
    </citation>
    <scope>NUCLEOTIDE SEQUENCE [LARGE SCALE GENOMIC DNA]</scope>
</reference>
<reference key="5">
    <citation type="submission" date="2005-07" db="EMBL/GenBank/DDBJ databases">
        <authorList>
            <person name="Mural R.J."/>
            <person name="Istrail S."/>
            <person name="Sutton G.G."/>
            <person name="Florea L."/>
            <person name="Halpern A.L."/>
            <person name="Mobarry C.M."/>
            <person name="Lippert R."/>
            <person name="Walenz B."/>
            <person name="Shatkay H."/>
            <person name="Dew I."/>
            <person name="Miller J.R."/>
            <person name="Flanigan M.J."/>
            <person name="Edwards N.J."/>
            <person name="Bolanos R."/>
            <person name="Fasulo D."/>
            <person name="Halldorsson B.V."/>
            <person name="Hannenhalli S."/>
            <person name="Turner R."/>
            <person name="Yooseph S."/>
            <person name="Lu F."/>
            <person name="Nusskern D.R."/>
            <person name="Shue B.C."/>
            <person name="Zheng X.H."/>
            <person name="Zhong F."/>
            <person name="Delcher A.L."/>
            <person name="Huson D.H."/>
            <person name="Kravitz S.A."/>
            <person name="Mouchard L."/>
            <person name="Reinert K."/>
            <person name="Remington K.A."/>
            <person name="Clark A.G."/>
            <person name="Waterman M.S."/>
            <person name="Eichler E.E."/>
            <person name="Adams M.D."/>
            <person name="Hunkapiller M.W."/>
            <person name="Myers E.W."/>
            <person name="Venter J.C."/>
        </authorList>
    </citation>
    <scope>NUCLEOTIDE SEQUENCE [LARGE SCALE GENOMIC DNA]</scope>
</reference>
<reference key="6">
    <citation type="journal article" date="2004" name="Genome Res.">
        <title>The status, quality, and expansion of the NIH full-length cDNA project: the Mammalian Gene Collection (MGC).</title>
        <authorList>
            <consortium name="The MGC Project Team"/>
        </authorList>
    </citation>
    <scope>NUCLEOTIDE SEQUENCE [LARGE SCALE MRNA] (ISOFORM 1)</scope>
    <source>
        <tissue>Skin</tissue>
    </source>
</reference>
<reference key="7">
    <citation type="journal article" date="2015" name="Mol. Cell. Proteomics">
        <title>Systematic determination of human cyclin dependent kinase (CDK)-9 interactome identifies novel functions in RNA splicing mediated by the DEAD box (DDX)-5/17 RNA helicases.</title>
        <authorList>
            <person name="Yang J."/>
            <person name="Zhao Y."/>
            <person name="Kalita M."/>
            <person name="Li X."/>
            <person name="Jamaluddin M."/>
            <person name="Tian B."/>
            <person name="Edeh C.B."/>
            <person name="Wiktorowicz J.E."/>
            <person name="Kudlicki A."/>
            <person name="Brasier A.R."/>
        </authorList>
    </citation>
    <scope>PROTEIN SEQUENCE OF 36-81; 122-154; 210-241; 255-269; 305-313; 365-372; 406-417; 421-428; 458-480; 489-505; 516-528; 536-547; 569-587 AND 671-684</scope>
    <scope>INTERACTION WITH CDK9</scope>
    <scope>FUNCTION IN ALTERNATIVE SPLICING</scope>
</reference>
<reference key="8">
    <citation type="journal article" date="2006" name="Dev. Cell">
        <title>The RNA helicases p68/p72 and the noncoding RNA SRA are coregulators of MyoD and skeletal muscle differentiation.</title>
        <authorList>
            <person name="Caretti G."/>
            <person name="Schiltz R.L."/>
            <person name="Dilworth F.J."/>
            <person name="Di Padova M."/>
            <person name="Zhao P."/>
            <person name="Ogryzko V."/>
            <person name="Fuller-Pace F.V."/>
            <person name="Hoffman E.P."/>
            <person name="Tapscott S.J."/>
            <person name="Sartorelli V."/>
        </authorList>
    </citation>
    <scope>PROTEIN SEQUENCE OF 305-314</scope>
    <scope>MASS SPECTROMETRY</scope>
    <scope>FUNCTION</scope>
    <scope>INTERACTION WITH MYOD1</scope>
</reference>
<reference key="9">
    <citation type="journal article" date="2001" name="EMBO J.">
        <title>A subfamily of RNA-binding DEAD-box proteins acts as an estrogen receptor alpha coactivator through the N-terminal activation domain (AF-1) with an RNA coactivator, SRA.</title>
        <authorList>
            <person name="Watanabe M."/>
            <person name="Yanagisawa J."/>
            <person name="Kitagawa H."/>
            <person name="Takeyama K."/>
            <person name="Ogawa S."/>
            <person name="Arao Y."/>
            <person name="Suzawa M."/>
            <person name="Kobayashi Y."/>
            <person name="Yano T."/>
            <person name="Yoshikawa H."/>
            <person name="Masuhiro Y."/>
            <person name="Kato S."/>
        </authorList>
    </citation>
    <scope>RETRACTED PAPER</scope>
</reference>
<reference key="10">
    <citation type="journal article" date="2014" name="EMBO J.">
        <authorList>
            <person name="Watanabe M."/>
            <person name="Yanagisawa J."/>
            <person name="Kitagawa H."/>
            <person name="Takeyama K."/>
            <person name="Ogawa S."/>
            <person name="Arao Y."/>
            <person name="Suzawa M."/>
            <person name="Kobayashi Y."/>
            <person name="Yano T."/>
            <person name="Yoshikawa H."/>
            <person name="Masuhiro Y."/>
            <person name="Kato S."/>
        </authorList>
    </citation>
    <scope>ERRATUM OF PUBMED:11250900</scope>
    <scope>RETRACTION NOTICE OF PUBMED:11250900</scope>
</reference>
<reference key="11">
    <citation type="journal article" date="2002" name="J. Biol. Chem.">
        <title>The mRNA of DEAD box protein p72 is alternatively translated into an 82-kDa RNA helicase.</title>
        <authorList>
            <person name="Uhlmann-Schiffler H."/>
            <person name="Rossler O.G."/>
            <person name="Stahl H."/>
        </authorList>
    </citation>
    <scope>ALTERNATIVE INITIATION (ISOFORM 1)</scope>
</reference>
<reference key="12">
    <citation type="journal article" date="2002" name="Mol. Cell. Biol.">
        <title>Regulation of alternative splicing by the ATP-dependent DEAD-box RNA helicase p72.</title>
        <authorList>
            <person name="Hoenig A."/>
            <person name="Auboeuf D."/>
            <person name="Parker M.M."/>
            <person name="O'Malley B.W."/>
            <person name="Berget S.M."/>
        </authorList>
    </citation>
    <scope>FUNCTION IN ALTERNATIVE SPLICING</scope>
    <scope>MUTAGENESIS OF LYS-221; THR-222; ASP-328; TRP-355 AND SER-356</scope>
    <scope>SUBCELLULAR LOCATION</scope>
</reference>
<reference key="13">
    <citation type="journal article" date="2003" name="Nucleic Acids Res.">
        <title>The highly related DEAD box RNA helicases p68 and p72 exist as heterodimers in cells.</title>
        <authorList>
            <person name="Ogilvie V.C."/>
            <person name="Wilson B.J."/>
            <person name="Nicol S.M."/>
            <person name="Morrice N.A."/>
            <person name="Saunders L.R."/>
            <person name="Barber G.N."/>
            <person name="Fuller-Pace F.V."/>
        </authorList>
    </citation>
    <scope>INTERACTION WITH DDX5</scope>
    <scope>SUBCELLULAR LOCATION</scope>
</reference>
<reference key="14">
    <citation type="journal article" date="2004" name="BMC Mol. Biol.">
        <title>The p68 and p72 DEAD box RNA helicases interact with HDAC1 and repress transcription in a promoter-specific manner.</title>
        <authorList>
            <person name="Wilson B.J."/>
            <person name="Bates G.J."/>
            <person name="Nicol S.M."/>
            <person name="Gregory D.J."/>
            <person name="Perkins N.D."/>
            <person name="Fuller-Pace F.V."/>
        </authorList>
    </citation>
    <scope>FUNCTION IN TRANSCRIPTIONAL REPRESSION</scope>
    <scope>INTERACTION WITH HDAC1</scope>
</reference>
<reference key="15">
    <citation type="journal article" date="2004" name="Nature">
        <title>The microprocessor complex mediates the genesis of microRNAs.</title>
        <authorList>
            <person name="Gregory R.I."/>
            <person name="Yan K.-P."/>
            <person name="Amuthan G."/>
            <person name="Chendrimada T."/>
            <person name="Doratotaj B."/>
            <person name="Cooch N."/>
            <person name="Shiekhattar R."/>
        </authorList>
    </citation>
    <scope>IDENTIFICATION IN A COMPLEX CONTAINING DROSHA</scope>
</reference>
<reference key="16">
    <citation type="journal article" date="2005" name="EMBO J.">
        <title>The DEAD box protein p68: a novel transcriptional coactivator of the p53 tumour suppressor.</title>
        <authorList>
            <person name="Bates G.J."/>
            <person name="Nicol S.M."/>
            <person name="Wilson B.J."/>
            <person name="Jacobs A.M."/>
            <person name="Bourdon J.C."/>
            <person name="Wardrop J."/>
            <person name="Gregory D.J."/>
            <person name="Lane D.P."/>
            <person name="Perkins N.D."/>
            <person name="Fuller-Pace F.V."/>
        </authorList>
    </citation>
    <scope>INTERACTION WITH TP53</scope>
</reference>
<reference key="17">
    <citation type="journal article" date="2006" name="Cell">
        <title>Global, in vivo, and site-specific phosphorylation dynamics in signaling networks.</title>
        <authorList>
            <person name="Olsen J.V."/>
            <person name="Blagoev B."/>
            <person name="Gnad F."/>
            <person name="Macek B."/>
            <person name="Kumar C."/>
            <person name="Mortensen P."/>
            <person name="Mann M."/>
        </authorList>
    </citation>
    <scope>IDENTIFICATION BY MASS SPECTROMETRY [LARGE SCALE ANALYSIS]</scope>
    <source>
        <tissue>Cervix carcinoma</tissue>
    </source>
</reference>
<reference key="18">
    <citation type="journal article" date="2006" name="Nat. Biotechnol.">
        <title>A probability-based approach for high-throughput protein phosphorylation analysis and site localization.</title>
        <authorList>
            <person name="Beausoleil S.A."/>
            <person name="Villen J."/>
            <person name="Gerber S.A."/>
            <person name="Rush J."/>
            <person name="Gygi S.P."/>
        </authorList>
    </citation>
    <scope>PHOSPHORYLATION [LARGE SCALE ANALYSIS] AT THR-523</scope>
    <scope>IDENTIFICATION BY MASS SPECTROMETRY [LARGE SCALE ANALYSIS]</scope>
    <source>
        <tissue>Cervix carcinoma</tissue>
    </source>
</reference>
<reference key="19">
    <citation type="journal article" date="2007" name="Cancer Res.">
        <title>Involvement of RNA helicases p68 and p72 in colon cancer.</title>
        <authorList>
            <person name="Shin S."/>
            <person name="Rossow K.L."/>
            <person name="Grande J.P."/>
            <person name="Janknecht R."/>
        </authorList>
    </citation>
    <scope>FUNCTION AS TRANSCRIPTIONAL COACTIVATOR</scope>
    <scope>INTERACTION WITH CTNNB1</scope>
    <scope>SUBCELLULAR LOCATION</scope>
    <scope>TISSUE SPECIFICITY</scope>
</reference>
<reference key="20">
    <citation type="journal article" date="2007" name="J. Cell. Biochem.">
        <title>Concerted activation of the Mdm2 promoter by p72 RNA helicase and the coactivators p300 and P/CAF.</title>
        <authorList>
            <person name="Shin S."/>
            <person name="Janknecht R."/>
        </authorList>
    </citation>
    <scope>FUNCTION AS TRANSCRIPTIONAL COACTIVATOR</scope>
    <scope>INTERACTION WITH EP300; CREBBP AND KAT2B</scope>
    <scope>SUBCELLULAR LOCATION</scope>
    <scope>MUTAGENESIS OF LYS-221</scope>
</reference>
<reference key="21">
    <citation type="journal article" date="2007" name="Nucleic Acids Res.">
        <title>Redundant role of DEAD box proteins p68 (Ddx5) and p72/p82 (Ddx17) in ribosome biogenesis and cell proliferation.</title>
        <authorList>
            <person name="Jalal C."/>
            <person name="Uhlmann-Schiffler H."/>
            <person name="Stahl H."/>
        </authorList>
    </citation>
    <scope>FUNCTION</scope>
</reference>
<reference key="22">
    <citation type="journal article" date="2007" name="Science">
        <title>ATM and ATR substrate analysis reveals extensive protein networks responsive to DNA damage.</title>
        <authorList>
            <person name="Matsuoka S."/>
            <person name="Ballif B.A."/>
            <person name="Smogorzewska A."/>
            <person name="McDonald E.R. III"/>
            <person name="Hurov K.E."/>
            <person name="Luo J."/>
            <person name="Bakalarski C.E."/>
            <person name="Zhao Z."/>
            <person name="Solimini N."/>
            <person name="Lerenthal Y."/>
            <person name="Shiloh Y."/>
            <person name="Gygi S.P."/>
            <person name="Elledge S.J."/>
        </authorList>
    </citation>
    <scope>IDENTIFICATION BY MASS SPECTROMETRY [LARGE SCALE ANALYSIS]</scope>
    <source>
        <tissue>Embryonic kidney</tissue>
    </source>
</reference>
<reference key="23">
    <citation type="journal article" date="2008" name="Exp. Cell Res.">
        <title>Transcription-dependent nucleolar cap localization and possible nuclear function of DExH RNA helicase RHAU.</title>
        <authorList>
            <person name="Iwamoto F."/>
            <person name="Stadler M."/>
            <person name="Chalupnikova K."/>
            <person name="Oakeley E."/>
            <person name="Nagamine Y."/>
        </authorList>
    </citation>
    <scope>INTERACTION WITH DHX36</scope>
</reference>
<reference key="24">
    <citation type="journal article" date="2008" name="Proc. Natl. Acad. Sci. U.S.A.">
        <title>A quantitative atlas of mitotic phosphorylation.</title>
        <authorList>
            <person name="Dephoure N."/>
            <person name="Zhou C."/>
            <person name="Villen J."/>
            <person name="Beausoleil S.A."/>
            <person name="Bakalarski C.E."/>
            <person name="Elledge S.J."/>
            <person name="Gygi S.P."/>
        </authorList>
    </citation>
    <scope>IDENTIFICATION BY MASS SPECTROMETRY [LARGE SCALE ANALYSIS]</scope>
    <source>
        <tissue>Cervix carcinoma</tissue>
    </source>
</reference>
<reference key="25">
    <citation type="journal article" date="2008" name="Proc. Natl. Acad. Sci. U.S.A.">
        <title>p72 DEAD box RNA helicase is required for optimal function of the zinc-finger antiviral protein.</title>
        <authorList>
            <person name="Chen G."/>
            <person name="Guo X."/>
            <person name="Lv F."/>
            <person name="Xu Y."/>
            <person name="Gao G."/>
        </authorList>
    </citation>
    <scope>FUNCTION</scope>
    <scope>INTERACTION WITH ZC3HAV1; EXOSC3 AND EXOSC5</scope>
    <scope>MUTAGENESIS OF LYS-221</scope>
</reference>
<reference key="26">
    <citation type="journal article" date="2009" name="Oncogene">
        <title>The DEAD-box protein p72 regulates ERalpha-/oestrogen-dependent transcription and cell growth, and is associated with improved survival in ERalpha-positive breast cancer.</title>
        <authorList>
            <person name="Wortham N.C."/>
            <person name="Ahamed E."/>
            <person name="Nicol S.M."/>
            <person name="Thomas R.S."/>
            <person name="Periyasamy M."/>
            <person name="Jiang J."/>
            <person name="Ochocka A.M."/>
            <person name="Shousha S."/>
            <person name="Huson L."/>
            <person name="Bray S.E."/>
            <person name="Coombes R.C."/>
            <person name="Ali S."/>
            <person name="Fuller-Pace F.V."/>
        </authorList>
    </citation>
    <scope>FUNCTION</scope>
    <scope>INTERACTION WITH ESR1</scope>
    <scope>MUTAGENESIS OF ASP-325</scope>
</reference>
<reference key="27">
    <citation type="journal article" date="2010" name="Biochemistry">
        <title>Sumoylation of p68 and p72 RNA helicases affects protein stability and transactivation potential.</title>
        <authorList>
            <person name="Mooney S.M."/>
            <person name="Grande J.P."/>
            <person name="Salisbury J.L."/>
            <person name="Janknecht R."/>
        </authorList>
    </citation>
    <scope>FUNCTION</scope>
    <scope>SUMOYLATION AT LYS-129</scope>
    <scope>MUTAGENESIS OF LYS-129</scope>
    <scope>INTERACTION WITH DDX5; HDAC1; HDAC2; HDAC3; EP300 AND ESR1</scope>
    <scope>SUBCELLULAR LOCATION</scope>
</reference>
<reference key="28">
    <citation type="journal article" date="2010" name="Cancer Res.">
        <title>Estrogen regulation and physiopathologic significance of alternative promoters in breast cancer.</title>
        <authorList>
            <person name="Dutertre M."/>
            <person name="Gratadou L."/>
            <person name="Dardenne E."/>
            <person name="Germann S."/>
            <person name="Samaan S."/>
            <person name="Lidereau R."/>
            <person name="Driouch K."/>
            <person name="de la Grange P."/>
            <person name="Auboeuf D."/>
        </authorList>
    </citation>
    <scope>FUNCTION IN ESTROGEN SIGNALING PATHWAY</scope>
</reference>
<reference key="29">
    <citation type="journal article" date="2010" name="J. Biol. Chem.">
        <title>Pleiotropic effects of p300-mediated acetylation on p68 and p72 RNA helicase.</title>
        <authorList>
            <person name="Mooney S.M."/>
            <person name="Goel A."/>
            <person name="D'Assoro A.B."/>
            <person name="Salisbury J.L."/>
            <person name="Janknecht R."/>
        </authorList>
    </citation>
    <scope>FUNCTION</scope>
    <scope>INTERACTION WITH ESR1; HDAC1; HDAC2 AND HDAC3</scope>
    <scope>ACETYLATION AT LYS-108; LYS-109 AND LYS-121</scope>
    <scope>MASS SPECTROMETRY</scope>
    <scope>MUTAGENESIS OF 108-LYS-LYS-109 AND LYS-121</scope>
</reference>
<reference key="30">
    <citation type="journal article" date="2010" name="Sci. Signal.">
        <title>Quantitative phosphoproteomics reveals widespread full phosphorylation site occupancy during mitosis.</title>
        <authorList>
            <person name="Olsen J.V."/>
            <person name="Vermeulen M."/>
            <person name="Santamaria A."/>
            <person name="Kumar C."/>
            <person name="Miller M.L."/>
            <person name="Jensen L.J."/>
            <person name="Gnad F."/>
            <person name="Cox J."/>
            <person name="Jensen T.S."/>
            <person name="Nigg E.A."/>
            <person name="Brunak S."/>
            <person name="Mann M."/>
        </authorList>
    </citation>
    <scope>PHOSPHORYLATION [LARGE SCALE ANALYSIS] AT SER-64</scope>
    <scope>IDENTIFICATION BY MASS SPECTROMETRY [LARGE SCALE ANALYSIS]</scope>
    <source>
        <tissue>Cervix carcinoma</tissue>
    </source>
</reference>
<reference key="31">
    <citation type="journal article" date="2011" name="BMC Syst. Biol.">
        <title>Initial characterization of the human central proteome.</title>
        <authorList>
            <person name="Burkard T.R."/>
            <person name="Planyavsky M."/>
            <person name="Kaupe I."/>
            <person name="Breitwieser F.P."/>
            <person name="Buerckstuemmer T."/>
            <person name="Bennett K.L."/>
            <person name="Superti-Furga G."/>
            <person name="Colinge J."/>
        </authorList>
    </citation>
    <scope>IDENTIFICATION BY MASS SPECTROMETRY [LARGE SCALE ANALYSIS]</scope>
</reference>
<reference key="32">
    <citation type="journal article" date="2011" name="Proc. Natl. Acad. Sci. U.S.A.">
        <title>Zinc-finger antiviral protein inhibits HIV-1 infection by selectively targeting multiply spliced viral mRNAs for degradation.</title>
        <authorList>
            <person name="Zhu Y."/>
            <person name="Chen G."/>
            <person name="Lv F."/>
            <person name="Wang X."/>
            <person name="Ji X."/>
            <person name="Xu Y."/>
            <person name="Sun J."/>
            <person name="Wu L."/>
            <person name="Zheng Y.T."/>
            <person name="Gao G."/>
        </authorList>
    </citation>
    <scope>INTERACTION WITH DCP1A AND DCP2</scope>
</reference>
<reference key="33">
    <citation type="journal article" date="2011" name="Sci. Signal.">
        <title>System-wide temporal characterization of the proteome and phosphoproteome of human embryonic stem cell differentiation.</title>
        <authorList>
            <person name="Rigbolt K.T."/>
            <person name="Prokhorova T.A."/>
            <person name="Akimov V."/>
            <person name="Henningsen J."/>
            <person name="Johansen P.T."/>
            <person name="Kratchmarova I."/>
            <person name="Kassem M."/>
            <person name="Mann M."/>
            <person name="Olsen J.V."/>
            <person name="Blagoev B."/>
        </authorList>
    </citation>
    <scope>IDENTIFICATION BY MASS SPECTROMETRY [LARGE SCALE ANALYSIS]</scope>
</reference>
<reference key="34">
    <citation type="journal article" date="2012" name="Mol. Cell. Proteomics">
        <title>Systematic analysis of protein pools, isoforms, and modifications affecting turnover and subcellular localization.</title>
        <authorList>
            <person name="Ahmad Y."/>
            <person name="Boisvert F.M."/>
            <person name="Lundberg E."/>
            <person name="Uhlen M."/>
            <person name="Lamond A.I."/>
        </authorList>
    </citation>
    <scope>SUBCELLULAR LOCATION [LARGE SCALE ANALYSIS]</scope>
</reference>
<reference key="35">
    <citation type="journal article" date="2012" name="Nat. Struct. Mol. Biol.">
        <title>Splicing switch of an epigenetic regulator by RNA helicases promotes tumor-cell invasiveness.</title>
        <authorList>
            <person name="Dardenne E."/>
            <person name="Pierredon S."/>
            <person name="Driouch K."/>
            <person name="Gratadou L."/>
            <person name="Lacroix-Triki M."/>
            <person name="Espinoza M.P."/>
            <person name="Zonta E."/>
            <person name="Germann S."/>
            <person name="Mortada H."/>
            <person name="Villemin J.P."/>
            <person name="Dutertre M."/>
            <person name="Lidereau R."/>
            <person name="Vagner S."/>
            <person name="Auboeuf D."/>
        </authorList>
    </citation>
    <scope>FUNCTION IN ALTERNATIVE SPLICING</scope>
</reference>
<reference key="36">
    <citation type="journal article" date="2012" name="Oncogene">
        <title>Dual role of the ddx5/ddx17 RNA helicases in the control of the pro-migratory NFAT5 transcription factor.</title>
        <authorList>
            <person name="Germann S."/>
            <person name="Gratadou L."/>
            <person name="Zonta E."/>
            <person name="Dardenne E."/>
            <person name="Gaudineau B."/>
            <person name="Fougere M."/>
            <person name="Samaan S."/>
            <person name="Dutertre M."/>
            <person name="Jauliac S."/>
            <person name="Auboeuf D."/>
        </authorList>
    </citation>
    <scope>FUNCTION</scope>
    <scope>INTERACTION WITH NFAT5</scope>
</reference>
<reference key="37">
    <citation type="journal article" date="2013" name="J. Proteome Res.">
        <title>Toward a comprehensive characterization of a human cancer cell phosphoproteome.</title>
        <authorList>
            <person name="Zhou H."/>
            <person name="Di Palma S."/>
            <person name="Preisinger C."/>
            <person name="Peng M."/>
            <person name="Polat A.N."/>
            <person name="Heck A.J."/>
            <person name="Mohammed S."/>
        </authorList>
    </citation>
    <scope>IDENTIFICATION BY MASS SPECTROMETRY [LARGE SCALE ANALYSIS]</scope>
    <source>
        <tissue>Cervix carcinoma</tissue>
        <tissue>Erythroleukemia</tissue>
    </source>
</reference>
<reference key="38">
    <citation type="journal article" date="2013" name="Nucleic Acids Res.">
        <title>The RNA helicase Ddx5/p68 binds to hUpf3 and enhances NMD of Ddx17/p72 and Smg5 mRNA.</title>
        <authorList>
            <person name="Geissler V."/>
            <person name="Altmeyer S."/>
            <person name="Stein B."/>
            <person name="Uhlmann-Schiffler H."/>
            <person name="Stahl H."/>
        </authorList>
    </citation>
    <scope>INTERACTION WITH UPF3B</scope>
</reference>
<reference key="39">
    <citation type="journal article" date="2014" name="Biochem. Biophys. Res. Commun.">
        <title>Cell cycle-dependent regulation of Aurora kinase B mRNA by the Microprocessor complex.</title>
        <authorList>
            <person name="Jung E."/>
            <person name="Seong Y."/>
            <person name="Seo J.H."/>
            <person name="Kwon Y.S."/>
            <person name="Song H."/>
        </authorList>
    </citation>
    <scope>INTERACTION WITH DGCR8</scope>
</reference>
<reference key="40">
    <citation type="journal article" date="2014" name="Cell">
        <title>Hippo signaling regulates microprocessor and links cell-density-dependent miRNA biogenesis to cancer.</title>
        <authorList>
            <person name="Mori M."/>
            <person name="Triboulet R."/>
            <person name="Mohseni M."/>
            <person name="Schlegelmilch K."/>
            <person name="Shrestha K."/>
            <person name="Camargo F.D."/>
            <person name="Gregory R.I."/>
        </authorList>
    </citation>
    <scope>FUNCTION IN MICRORNA MATURATION</scope>
    <scope>INTERACTION WITH DROSHA; DGCR8 AND YAP1</scope>
    <scope>SUBCELLULAR LOCATION</scope>
    <scope>MUTAGENESIS OF LYS-129</scope>
</reference>
<reference key="41">
    <citation type="journal article" date="2014" name="Cell">
        <title>Stem-loop recognition by DDX17 facilitates miRNA processing and antiviral defense.</title>
        <authorList>
            <person name="Moy R.H."/>
            <person name="Cole B.S."/>
            <person name="Yasunaga A."/>
            <person name="Gold B."/>
            <person name="Shankarling G."/>
            <person name="Varble A."/>
            <person name="Molleston J.M."/>
            <person name="tenOever B.R."/>
            <person name="Lynch K.W."/>
            <person name="Cherry S."/>
        </authorList>
    </citation>
    <scope>FUNCTION IN ANTIVIRAL DEFENSE</scope>
    <scope>SUBCELLULAR LOCATION</scope>
</reference>
<reference key="42">
    <citation type="journal article" date="2014" name="Cell Rep.">
        <title>RNA helicases DDX5 and DDX17 dynamically orchestrate transcription, miRNA, and splicing programs in cell differentiation.</title>
        <authorList>
            <person name="Dardenne E."/>
            <person name="Polay Espinoza M."/>
            <person name="Fattet L."/>
            <person name="Germann S."/>
            <person name="Lambert M.P."/>
            <person name="Neil H."/>
            <person name="Zonta E."/>
            <person name="Mortada H."/>
            <person name="Gratadou L."/>
            <person name="Deygas M."/>
            <person name="Chakrama F.Z."/>
            <person name="Samaan S."/>
            <person name="Desmet F.O."/>
            <person name="Tranchevent L.C."/>
            <person name="Dutertre M."/>
            <person name="Rimokh R."/>
            <person name="Bourgeois C.F."/>
            <person name="Auboeuf D."/>
        </authorList>
    </citation>
    <scope>FUNCTION</scope>
    <scope>INTERACTION WITH HNRNPH1</scope>
</reference>
<reference key="43">
    <citation type="journal article" date="2014" name="J. Proteomics">
        <title>An enzyme assisted RP-RPLC approach for in-depth analysis of human liver phosphoproteome.</title>
        <authorList>
            <person name="Bian Y."/>
            <person name="Song C."/>
            <person name="Cheng K."/>
            <person name="Dong M."/>
            <person name="Wang F."/>
            <person name="Huang J."/>
            <person name="Sun D."/>
            <person name="Wang L."/>
            <person name="Ye M."/>
            <person name="Zou H."/>
        </authorList>
    </citation>
    <scope>PHOSPHORYLATION [LARGE SCALE ANALYSIS] AT SER-64</scope>
    <scope>IDENTIFICATION BY MASS SPECTROMETRY [LARGE SCALE ANALYSIS]</scope>
    <source>
        <tissue>Liver</tissue>
    </source>
</reference>
<reference key="44">
    <citation type="journal article" date="2014" name="Mol. Cell. Proteomics">
        <title>Immunoaffinity enrichment and mass spectrometry analysis of protein methylation.</title>
        <authorList>
            <person name="Guo A."/>
            <person name="Gu H."/>
            <person name="Zhou J."/>
            <person name="Mulhern D."/>
            <person name="Wang Y."/>
            <person name="Lee K.A."/>
            <person name="Yang V."/>
            <person name="Aguiar M."/>
            <person name="Kornhauser J."/>
            <person name="Jia X."/>
            <person name="Ren J."/>
            <person name="Beausoleil S.A."/>
            <person name="Silva J.C."/>
            <person name="Vemulapalli V."/>
            <person name="Bedford M.T."/>
            <person name="Comb M.J."/>
        </authorList>
    </citation>
    <scope>METHYLATION [LARGE SCALE ANALYSIS] AT ARG-684</scope>
    <scope>IDENTIFICATION BY MASS SPECTROMETRY [LARGE SCALE ANALYSIS]</scope>
    <source>
        <tissue>Colon carcinoma</tissue>
    </source>
</reference>
<reference key="45">
    <citation type="journal article" date="2014" name="Nat. Struct. Mol. Biol.">
        <title>Uncovering global SUMOylation signaling networks in a site-specific manner.</title>
        <authorList>
            <person name="Hendriks I.A."/>
            <person name="D'Souza R.C."/>
            <person name="Yang B."/>
            <person name="Verlaan-de Vries M."/>
            <person name="Mann M."/>
            <person name="Vertegaal A.C."/>
        </authorList>
    </citation>
    <scope>SUMOYLATION [LARGE SCALE ANALYSIS] AT LYS-129</scope>
    <scope>IDENTIFICATION BY MASS SPECTROMETRY [LARGE SCALE ANALYSIS]</scope>
</reference>
<reference key="46">
    <citation type="journal article" date="2014" name="Nucleic Acids Res.">
        <title>The Ddx5 and Ddx17 RNA helicases are cornerstones in the complex regulatory array of steroid hormone-signaling pathways.</title>
        <authorList>
            <person name="Samaan S."/>
            <person name="Tranchevent L.C."/>
            <person name="Dardenne E."/>
            <person name="Polay Espinoza M."/>
            <person name="Zonta E."/>
            <person name="Germann S."/>
            <person name="Gratadou L."/>
            <person name="Dutertre M."/>
            <person name="Auboeuf D."/>
        </authorList>
    </citation>
    <scope>FUNCTION</scope>
    <scope>MUTAGENESIS OF LYS-221</scope>
</reference>
<reference key="47">
    <citation type="journal article" date="2014" name="Proc. Natl. Acad. Sci. U.S.A.">
        <title>Mapping of SUMO sites and analysis of SUMOylation changes induced by external stimuli.</title>
        <authorList>
            <person name="Impens F."/>
            <person name="Radoshevich L."/>
            <person name="Cossart P."/>
            <person name="Ribet D."/>
        </authorList>
    </citation>
    <scope>SUMOYLATION [LARGE SCALE ANALYSIS] AT LYS-129</scope>
    <scope>IDENTIFICATION BY MASS SPECTROMETRY [LARGE SCALE ANALYSIS]</scope>
</reference>
<reference key="48">
    <citation type="journal article" date="2015" name="Cell Rep.">
        <title>SUMO-2 orchestrates chromatin modifiers in response to DNA damage.</title>
        <authorList>
            <person name="Hendriks I.A."/>
            <person name="Treffers L.W."/>
            <person name="Verlaan-de Vries M."/>
            <person name="Olsen J.V."/>
            <person name="Vertegaal A.C."/>
        </authorList>
    </citation>
    <scope>SUMOYLATION [LARGE SCALE ANALYSIS] AT LYS-129</scope>
    <scope>IDENTIFICATION BY MASS SPECTROMETRY [LARGE SCALE ANALYSIS]</scope>
</reference>
<reference key="49">
    <citation type="journal article" date="2015" name="Mol. Cell. Proteomics">
        <title>System-wide analysis of SUMOylation dynamics in response to replication stress reveals novel small ubiquitin-like modified target proteins and acceptor lysines relevant for genome stability.</title>
        <authorList>
            <person name="Xiao Z."/>
            <person name="Chang J.G."/>
            <person name="Hendriks I.A."/>
            <person name="Sigurdsson J.O."/>
            <person name="Olsen J.V."/>
            <person name="Vertegaal A.C."/>
        </authorList>
    </citation>
    <scope>SUMOYLATION [LARGE SCALE ANALYSIS] AT LYS-129</scope>
    <scope>IDENTIFICATION BY MASS SPECTROMETRY [LARGE SCALE ANALYSIS]</scope>
</reference>
<reference key="50">
    <citation type="journal article" date="2015" name="PLoS ONE">
        <title>Identification of Novel Proteins Co-Purifying with Cockayne Syndrome Group B (CSB) Reveals Potential Roles for CSB in RNA Metabolism and Chromatin Dynamics.</title>
        <authorList>
            <person name="Nicolai S."/>
            <person name="Filippi S."/>
            <person name="Caputo M."/>
            <person name="Cipak L."/>
            <person name="Gregan J."/>
            <person name="Ammerer G."/>
            <person name="Frontini M."/>
            <person name="Willems D."/>
            <person name="Prantera G."/>
            <person name="Balajee A.S."/>
            <person name="Proietti-De-Santis L."/>
        </authorList>
    </citation>
    <scope>INTERACTION WITH ERCC6</scope>
</reference>
<reference key="51">
    <citation type="journal article" date="2016" name="Biochim. Biophys. Acta">
        <title>The miRNA biogenesis factors, p72/DDX17 and KHSRP regulate the protein level of Ago2 in human cells.</title>
        <authorList>
            <person name="Connerty P."/>
            <person name="Bajan S."/>
            <person name="Remenyi J."/>
            <person name="Fuller-Pace F.V."/>
            <person name="Hutvagner G."/>
        </authorList>
    </citation>
    <scope>FUNCTION</scope>
</reference>
<reference key="52">
    <citation type="journal article" date="2017" name="Nat. Struct. Mol. Biol.">
        <title>Site-specific mapping of the human SUMO proteome reveals co-modification with phosphorylation.</title>
        <authorList>
            <person name="Hendriks I.A."/>
            <person name="Lyon D."/>
            <person name="Young C."/>
            <person name="Jensen L.J."/>
            <person name="Vertegaal A.C."/>
            <person name="Nielsen M.L."/>
        </authorList>
    </citation>
    <scope>SUMOYLATION [LARGE SCALE ANALYSIS] AT LYS-129 AND LYS-528</scope>
    <scope>IDENTIFICATION BY MASS SPECTROMETRY [LARGE SCALE ANALYSIS]</scope>
</reference>